<gene>
    <name type="primary">ACVRL1</name>
    <name type="synonym">ACVRLK1</name>
    <name type="synonym">ALK1</name>
</gene>
<protein>
    <recommendedName>
        <fullName evidence="24">Activin receptor type-1-like</fullName>
        <ecNumber>2.7.11.30</ecNumber>
    </recommendedName>
    <alternativeName>
        <fullName>Activin receptor-like kinase 1</fullName>
        <shortName>ALK-1</shortName>
    </alternativeName>
    <alternativeName>
        <fullName>Serine/threonine-protein kinase receptor R3</fullName>
        <shortName>SKR3</shortName>
    </alternativeName>
    <alternativeName>
        <fullName>TGF-B superfamily receptor type I</fullName>
        <shortName>TSR-I</shortName>
    </alternativeName>
</protein>
<dbReference type="EC" id="2.7.11.30"/>
<dbReference type="EMBL" id="Z22533">
    <property type="protein sequence ID" value="CAA80255.1"/>
    <property type="molecule type" value="mRNA"/>
</dbReference>
<dbReference type="EMBL" id="L17075">
    <property type="protein sequence ID" value="AAA16160.1"/>
    <property type="molecule type" value="mRNA"/>
</dbReference>
<dbReference type="EMBL" id="U77713">
    <property type="protein sequence ID" value="AAB61900.1"/>
    <property type="molecule type" value="Genomic_DNA"/>
</dbReference>
<dbReference type="EMBL" id="U77707">
    <property type="protein sequence ID" value="AAB61900.1"/>
    <property type="status" value="JOINED"/>
    <property type="molecule type" value="Genomic_DNA"/>
</dbReference>
<dbReference type="EMBL" id="U77708">
    <property type="protein sequence ID" value="AAB61900.1"/>
    <property type="status" value="JOINED"/>
    <property type="molecule type" value="Genomic_DNA"/>
</dbReference>
<dbReference type="EMBL" id="U77709">
    <property type="protein sequence ID" value="AAB61900.1"/>
    <property type="status" value="JOINED"/>
    <property type="molecule type" value="Genomic_DNA"/>
</dbReference>
<dbReference type="EMBL" id="U77710">
    <property type="protein sequence ID" value="AAB61900.1"/>
    <property type="status" value="JOINED"/>
    <property type="molecule type" value="Genomic_DNA"/>
</dbReference>
<dbReference type="EMBL" id="U77711">
    <property type="protein sequence ID" value="AAB61900.1"/>
    <property type="status" value="JOINED"/>
    <property type="molecule type" value="Genomic_DNA"/>
</dbReference>
<dbReference type="EMBL" id="U77712">
    <property type="protein sequence ID" value="AAB61900.1"/>
    <property type="status" value="JOINED"/>
    <property type="molecule type" value="Genomic_DNA"/>
</dbReference>
<dbReference type="EMBL" id="AC025259">
    <property type="status" value="NOT_ANNOTATED_CDS"/>
    <property type="molecule type" value="Genomic_DNA"/>
</dbReference>
<dbReference type="EMBL" id="CH471111">
    <property type="protein sequence ID" value="EAW58213.1"/>
    <property type="molecule type" value="Genomic_DNA"/>
</dbReference>
<dbReference type="EMBL" id="BC042637">
    <property type="protein sequence ID" value="AAH42637.1"/>
    <property type="molecule type" value="mRNA"/>
</dbReference>
<dbReference type="CCDS" id="CCDS31804.1"/>
<dbReference type="PIR" id="A49431">
    <property type="entry name" value="A49431"/>
</dbReference>
<dbReference type="RefSeq" id="NP_000011.2">
    <property type="nucleotide sequence ID" value="NM_000020.3"/>
</dbReference>
<dbReference type="RefSeq" id="NP_001070869.1">
    <property type="nucleotide sequence ID" value="NM_001077401.2"/>
</dbReference>
<dbReference type="RefSeq" id="NP_001393416.1">
    <property type="nucleotide sequence ID" value="NM_001406487.1"/>
</dbReference>
<dbReference type="RefSeq" id="XP_005269292.1">
    <property type="nucleotide sequence ID" value="XM_005269235.2"/>
</dbReference>
<dbReference type="RefSeq" id="XP_047285857.1">
    <property type="nucleotide sequence ID" value="XM_047429901.1"/>
</dbReference>
<dbReference type="PDB" id="2LCR">
    <property type="method" value="NMR"/>
    <property type="chains" value="A=22-118"/>
</dbReference>
<dbReference type="PDB" id="3MY0">
    <property type="method" value="X-ray"/>
    <property type="resolution" value="2.65 A"/>
    <property type="chains" value="A/B/C/D/E/F/G/H/I/J/K/L/M/N/O/P/Q/R/S/T/U/V/W/X=195-497"/>
</dbReference>
<dbReference type="PDB" id="4FAO">
    <property type="method" value="X-ray"/>
    <property type="resolution" value="3.36 A"/>
    <property type="chains" value="C/D/I/J/O/P/U/V/c/d/i/j=22-118"/>
</dbReference>
<dbReference type="PDB" id="6SF1">
    <property type="method" value="X-ray"/>
    <property type="resolution" value="2.80 A"/>
    <property type="chains" value="A=21-118"/>
</dbReference>
<dbReference type="PDB" id="6SF2">
    <property type="method" value="X-ray"/>
    <property type="resolution" value="3.30 A"/>
    <property type="chains" value="A/D=21-118"/>
</dbReference>
<dbReference type="PDB" id="6SF3">
    <property type="method" value="X-ray"/>
    <property type="resolution" value="2.30 A"/>
    <property type="chains" value="A=21-118"/>
</dbReference>
<dbReference type="PDB" id="7PPC">
    <property type="method" value="X-ray"/>
    <property type="resolution" value="3.60 A"/>
    <property type="chains" value="E/F/G/H=22-118"/>
</dbReference>
<dbReference type="PDBsum" id="2LCR"/>
<dbReference type="PDBsum" id="3MY0"/>
<dbReference type="PDBsum" id="4FAO"/>
<dbReference type="PDBsum" id="6SF1"/>
<dbReference type="PDBsum" id="6SF2"/>
<dbReference type="PDBsum" id="6SF3"/>
<dbReference type="PDBsum" id="7PPC"/>
<dbReference type="BMRB" id="P37023"/>
<dbReference type="SMR" id="P37023"/>
<dbReference type="BioGRID" id="106609">
    <property type="interactions" value="33"/>
</dbReference>
<dbReference type="DIP" id="DIP-5938N"/>
<dbReference type="FunCoup" id="P37023">
    <property type="interactions" value="335"/>
</dbReference>
<dbReference type="IntAct" id="P37023">
    <property type="interactions" value="8"/>
</dbReference>
<dbReference type="MINT" id="P37023"/>
<dbReference type="STRING" id="9606.ENSP00000373574"/>
<dbReference type="BindingDB" id="P37023"/>
<dbReference type="ChEMBL" id="CHEMBL5311"/>
<dbReference type="DrugBank" id="DB00171">
    <property type="generic name" value="ATP"/>
</dbReference>
<dbReference type="DrugCentral" id="P37023"/>
<dbReference type="GuidetoPHARMACOLOGY" id="1784"/>
<dbReference type="GlyCosmos" id="P37023">
    <property type="glycosylation" value="1 site, No reported glycans"/>
</dbReference>
<dbReference type="GlyGen" id="P37023">
    <property type="glycosylation" value="1 site"/>
</dbReference>
<dbReference type="iPTMnet" id="P37023"/>
<dbReference type="PhosphoSitePlus" id="P37023"/>
<dbReference type="BioMuta" id="ACVRL1"/>
<dbReference type="DMDM" id="3915750"/>
<dbReference type="jPOST" id="P37023"/>
<dbReference type="MassIVE" id="P37023"/>
<dbReference type="PaxDb" id="9606-ENSP00000373574"/>
<dbReference type="PeptideAtlas" id="P37023"/>
<dbReference type="ProteomicsDB" id="55254"/>
<dbReference type="ABCD" id="P37023">
    <property type="antibodies" value="1 sequenced antibody"/>
</dbReference>
<dbReference type="Antibodypedia" id="2055">
    <property type="antibodies" value="640 antibodies from 40 providers"/>
</dbReference>
<dbReference type="DNASU" id="94"/>
<dbReference type="Ensembl" id="ENST00000388922.9">
    <property type="protein sequence ID" value="ENSP00000373574.4"/>
    <property type="gene ID" value="ENSG00000139567.14"/>
</dbReference>
<dbReference type="Ensembl" id="ENST00000551576.6">
    <property type="protein sequence ID" value="ENSP00000455848.2"/>
    <property type="gene ID" value="ENSG00000139567.14"/>
</dbReference>
<dbReference type="GeneID" id="94"/>
<dbReference type="KEGG" id="hsa:94"/>
<dbReference type="MANE-Select" id="ENST00000388922.9">
    <property type="protein sequence ID" value="ENSP00000373574.4"/>
    <property type="RefSeq nucleotide sequence ID" value="NM_000020.3"/>
    <property type="RefSeq protein sequence ID" value="NP_000011.2"/>
</dbReference>
<dbReference type="UCSC" id="uc001rzj.4">
    <property type="organism name" value="human"/>
</dbReference>
<dbReference type="AGR" id="HGNC:175"/>
<dbReference type="CTD" id="94"/>
<dbReference type="DisGeNET" id="94"/>
<dbReference type="GeneCards" id="ACVRL1"/>
<dbReference type="GeneReviews" id="ACVRL1"/>
<dbReference type="HGNC" id="HGNC:175">
    <property type="gene designation" value="ACVRL1"/>
</dbReference>
<dbReference type="HPA" id="ENSG00000139567">
    <property type="expression patterns" value="Tissue enhanced (lung)"/>
</dbReference>
<dbReference type="MalaCards" id="ACVRL1"/>
<dbReference type="MIM" id="600376">
    <property type="type" value="phenotype"/>
</dbReference>
<dbReference type="MIM" id="601284">
    <property type="type" value="gene"/>
</dbReference>
<dbReference type="neXtProt" id="NX_P37023"/>
<dbReference type="OpenTargets" id="ENSG00000139567"/>
<dbReference type="Orphanet" id="774">
    <property type="disease" value="Hereditary hemorrhagic telangiectasia"/>
</dbReference>
<dbReference type="Orphanet" id="275777">
    <property type="disease" value="Heritable pulmonary arterial hypertension"/>
</dbReference>
<dbReference type="PharmGKB" id="PA24496"/>
<dbReference type="VEuPathDB" id="HostDB:ENSG00000139567"/>
<dbReference type="eggNOG" id="KOG2052">
    <property type="taxonomic scope" value="Eukaryota"/>
</dbReference>
<dbReference type="GeneTree" id="ENSGT00940000161446"/>
<dbReference type="HOGENOM" id="CLU_000288_8_1_1"/>
<dbReference type="InParanoid" id="P37023"/>
<dbReference type="OMA" id="TIHAENQ"/>
<dbReference type="OrthoDB" id="69842at2759"/>
<dbReference type="PAN-GO" id="P37023">
    <property type="GO annotations" value="11 GO annotations based on evolutionary models"/>
</dbReference>
<dbReference type="PhylomeDB" id="P37023"/>
<dbReference type="TreeFam" id="TF314724"/>
<dbReference type="BRENDA" id="2.7.10.2">
    <property type="organism ID" value="2681"/>
</dbReference>
<dbReference type="BRENDA" id="2.7.11.30">
    <property type="organism ID" value="2681"/>
</dbReference>
<dbReference type="PathwayCommons" id="P37023"/>
<dbReference type="Reactome" id="R-HSA-201451">
    <property type="pathway name" value="Signaling by BMP"/>
</dbReference>
<dbReference type="SignaLink" id="P37023"/>
<dbReference type="SIGNOR" id="P37023"/>
<dbReference type="BioGRID-ORCS" id="94">
    <property type="hits" value="32 hits in 1186 CRISPR screens"/>
</dbReference>
<dbReference type="ChiTaRS" id="ACVRL1">
    <property type="organism name" value="human"/>
</dbReference>
<dbReference type="EvolutionaryTrace" id="P37023"/>
<dbReference type="GeneWiki" id="ACVRL1"/>
<dbReference type="GenomeRNAi" id="94"/>
<dbReference type="Pharos" id="P37023">
    <property type="development level" value="Tchem"/>
</dbReference>
<dbReference type="PRO" id="PR:P37023"/>
<dbReference type="Proteomes" id="UP000005640">
    <property type="component" value="Chromosome 12"/>
</dbReference>
<dbReference type="RNAct" id="P37023">
    <property type="molecule type" value="protein"/>
</dbReference>
<dbReference type="Bgee" id="ENSG00000139567">
    <property type="expression patterns" value="Expressed in right lung and 152 other cell types or tissues"/>
</dbReference>
<dbReference type="ExpressionAtlas" id="P37023">
    <property type="expression patterns" value="baseline and differential"/>
</dbReference>
<dbReference type="GO" id="GO:0070724">
    <property type="term" value="C:BMP receptor complex"/>
    <property type="evidence" value="ECO:0000318"/>
    <property type="project" value="GO_Central"/>
</dbReference>
<dbReference type="GO" id="GO:0009986">
    <property type="term" value="C:cell surface"/>
    <property type="evidence" value="ECO:0000314"/>
    <property type="project" value="MGI"/>
</dbReference>
<dbReference type="GO" id="GO:0005886">
    <property type="term" value="C:plasma membrane"/>
    <property type="evidence" value="ECO:0000314"/>
    <property type="project" value="UniProtKB"/>
</dbReference>
<dbReference type="GO" id="GO:0048185">
    <property type="term" value="F:activin binding"/>
    <property type="evidence" value="ECO:0000314"/>
    <property type="project" value="UniProtKB"/>
</dbReference>
<dbReference type="GO" id="GO:0016361">
    <property type="term" value="F:activin receptor activity, type I"/>
    <property type="evidence" value="ECO:0000314"/>
    <property type="project" value="MGI"/>
</dbReference>
<dbReference type="GO" id="GO:0005524">
    <property type="term" value="F:ATP binding"/>
    <property type="evidence" value="ECO:0000314"/>
    <property type="project" value="HGNC-UCL"/>
</dbReference>
<dbReference type="GO" id="GO:0098821">
    <property type="term" value="F:BMP receptor activity"/>
    <property type="evidence" value="ECO:0000314"/>
    <property type="project" value="ARUK-UCL"/>
</dbReference>
<dbReference type="GO" id="GO:0046872">
    <property type="term" value="F:metal ion binding"/>
    <property type="evidence" value="ECO:0007669"/>
    <property type="project" value="UniProtKB-KW"/>
</dbReference>
<dbReference type="GO" id="GO:0019901">
    <property type="term" value="F:protein kinase binding"/>
    <property type="evidence" value="ECO:0000353"/>
    <property type="project" value="BHF-UCL"/>
</dbReference>
<dbReference type="GO" id="GO:0004674">
    <property type="term" value="F:protein serine/threonine kinase activity"/>
    <property type="evidence" value="ECO:0000314"/>
    <property type="project" value="HGNC-UCL"/>
</dbReference>
<dbReference type="GO" id="GO:0046332">
    <property type="term" value="F:SMAD binding"/>
    <property type="evidence" value="ECO:0000314"/>
    <property type="project" value="HGNC-UCL"/>
</dbReference>
<dbReference type="GO" id="GO:0050431">
    <property type="term" value="F:transforming growth factor beta binding"/>
    <property type="evidence" value="ECO:0000353"/>
    <property type="project" value="UniProtKB"/>
</dbReference>
<dbReference type="GO" id="GO:0005024">
    <property type="term" value="F:transforming growth factor beta receptor activity"/>
    <property type="evidence" value="ECO:0000314"/>
    <property type="project" value="MGI"/>
</dbReference>
<dbReference type="GO" id="GO:0005025">
    <property type="term" value="F:transforming growth factor beta receptor activity, type I"/>
    <property type="evidence" value="ECO:0000314"/>
    <property type="project" value="UniProtKB"/>
</dbReference>
<dbReference type="GO" id="GO:0004675">
    <property type="term" value="F:transmembrane receptor protein serine/threonine kinase activity"/>
    <property type="evidence" value="ECO:0000303"/>
    <property type="project" value="UniProtKB"/>
</dbReference>
<dbReference type="GO" id="GO:0001525">
    <property type="term" value="P:angiogenesis"/>
    <property type="evidence" value="ECO:0000315"/>
    <property type="project" value="HGNC-UCL"/>
</dbReference>
<dbReference type="GO" id="GO:0060840">
    <property type="term" value="P:artery development"/>
    <property type="evidence" value="ECO:0000250"/>
    <property type="project" value="BHF-UCL"/>
</dbReference>
<dbReference type="GO" id="GO:0008015">
    <property type="term" value="P:blood circulation"/>
    <property type="evidence" value="ECO:0000315"/>
    <property type="project" value="HGNC-UCL"/>
</dbReference>
<dbReference type="GO" id="GO:0002043">
    <property type="term" value="P:blood vessel endothelial cell proliferation involved in sprouting angiogenesis"/>
    <property type="evidence" value="ECO:0000304"/>
    <property type="project" value="DFLAT"/>
</dbReference>
<dbReference type="GO" id="GO:0001955">
    <property type="term" value="P:blood vessel maturation"/>
    <property type="evidence" value="ECO:0000304"/>
    <property type="project" value="DFLAT"/>
</dbReference>
<dbReference type="GO" id="GO:0001974">
    <property type="term" value="P:blood vessel remodeling"/>
    <property type="evidence" value="ECO:0000250"/>
    <property type="project" value="BHF-UCL"/>
</dbReference>
<dbReference type="GO" id="GO:0030509">
    <property type="term" value="P:BMP signaling pathway"/>
    <property type="evidence" value="ECO:0000314"/>
    <property type="project" value="HGNC-UCL"/>
</dbReference>
<dbReference type="GO" id="GO:0030154">
    <property type="term" value="P:cell differentiation"/>
    <property type="evidence" value="ECO:0000318"/>
    <property type="project" value="GO_Central"/>
</dbReference>
<dbReference type="GO" id="GO:0071773">
    <property type="term" value="P:cellular response to BMP stimulus"/>
    <property type="evidence" value="ECO:0000315"/>
    <property type="project" value="BHF-UCL"/>
</dbReference>
<dbReference type="GO" id="GO:0071363">
    <property type="term" value="P:cellular response to growth factor stimulus"/>
    <property type="evidence" value="ECO:0000318"/>
    <property type="project" value="GO_Central"/>
</dbReference>
<dbReference type="GO" id="GO:0071560">
    <property type="term" value="P:cellular response to transforming growth factor beta stimulus"/>
    <property type="evidence" value="ECO:0000314"/>
    <property type="project" value="BHF-UCL"/>
</dbReference>
<dbReference type="GO" id="GO:0035912">
    <property type="term" value="P:dorsal aorta morphogenesis"/>
    <property type="evidence" value="ECO:0000250"/>
    <property type="project" value="BHF-UCL"/>
</dbReference>
<dbReference type="GO" id="GO:0009953">
    <property type="term" value="P:dorsal/ventral pattern formation"/>
    <property type="evidence" value="ECO:0000318"/>
    <property type="project" value="GO_Central"/>
</dbReference>
<dbReference type="GO" id="GO:0003203">
    <property type="term" value="P:endocardial cushion morphogenesis"/>
    <property type="evidence" value="ECO:0000250"/>
    <property type="project" value="BHF-UCL"/>
</dbReference>
<dbReference type="GO" id="GO:0061154">
    <property type="term" value="P:endothelial tube morphogenesis"/>
    <property type="evidence" value="ECO:0000315"/>
    <property type="project" value="BHF-UCL"/>
</dbReference>
<dbReference type="GO" id="GO:0007507">
    <property type="term" value="P:heart development"/>
    <property type="evidence" value="ECO:0000318"/>
    <property type="project" value="GO_Central"/>
</dbReference>
<dbReference type="GO" id="GO:0001701">
    <property type="term" value="P:in utero embryonic development"/>
    <property type="evidence" value="ECO:0007669"/>
    <property type="project" value="Ensembl"/>
</dbReference>
<dbReference type="GO" id="GO:0001946">
    <property type="term" value="P:lymphangiogenesis"/>
    <property type="evidence" value="ECO:0000250"/>
    <property type="project" value="BHF-UCL"/>
</dbReference>
<dbReference type="GO" id="GO:0060836">
    <property type="term" value="P:lymphatic endothelial cell differentiation"/>
    <property type="evidence" value="ECO:0000315"/>
    <property type="project" value="BHF-UCL"/>
</dbReference>
<dbReference type="GO" id="GO:0043537">
    <property type="term" value="P:negative regulation of blood vessel endothelial cell migration"/>
    <property type="evidence" value="ECO:0000315"/>
    <property type="project" value="BHF-UCL"/>
</dbReference>
<dbReference type="GO" id="GO:0007162">
    <property type="term" value="P:negative regulation of cell adhesion"/>
    <property type="evidence" value="ECO:0000315"/>
    <property type="project" value="HGNC-UCL"/>
</dbReference>
<dbReference type="GO" id="GO:0030308">
    <property type="term" value="P:negative regulation of cell growth"/>
    <property type="evidence" value="ECO:0000314"/>
    <property type="project" value="BHF-UCL"/>
</dbReference>
<dbReference type="GO" id="GO:0030336">
    <property type="term" value="P:negative regulation of cell migration"/>
    <property type="evidence" value="ECO:0000315"/>
    <property type="project" value="HGNC-UCL"/>
</dbReference>
<dbReference type="GO" id="GO:0008285">
    <property type="term" value="P:negative regulation of cell population proliferation"/>
    <property type="evidence" value="ECO:0000315"/>
    <property type="project" value="HGNC-UCL"/>
</dbReference>
<dbReference type="GO" id="GO:0045602">
    <property type="term" value="P:negative regulation of endothelial cell differentiation"/>
    <property type="evidence" value="ECO:0007669"/>
    <property type="project" value="Ensembl"/>
</dbReference>
<dbReference type="GO" id="GO:0010596">
    <property type="term" value="P:negative regulation of endothelial cell migration"/>
    <property type="evidence" value="ECO:0000314"/>
    <property type="project" value="BHF-UCL"/>
</dbReference>
<dbReference type="GO" id="GO:0001937">
    <property type="term" value="P:negative regulation of endothelial cell proliferation"/>
    <property type="evidence" value="ECO:0007669"/>
    <property type="project" value="Ensembl"/>
</dbReference>
<dbReference type="GO" id="GO:0051895">
    <property type="term" value="P:negative regulation of focal adhesion assembly"/>
    <property type="evidence" value="ECO:0000315"/>
    <property type="project" value="HGNC-UCL"/>
</dbReference>
<dbReference type="GO" id="GO:0010629">
    <property type="term" value="P:negative regulation of gene expression"/>
    <property type="evidence" value="ECO:0000250"/>
    <property type="project" value="BHF-UCL"/>
</dbReference>
<dbReference type="GO" id="GO:0045766">
    <property type="term" value="P:positive regulation of angiogenesis"/>
    <property type="evidence" value="ECO:0007669"/>
    <property type="project" value="Ensembl"/>
</dbReference>
<dbReference type="GO" id="GO:1903348">
    <property type="term" value="P:positive regulation of bicellular tight junction assembly"/>
    <property type="evidence" value="ECO:0000316"/>
    <property type="project" value="BHF-UCL"/>
</dbReference>
<dbReference type="GO" id="GO:0030513">
    <property type="term" value="P:positive regulation of BMP signaling pathway"/>
    <property type="evidence" value="ECO:0000314"/>
    <property type="project" value="BHF-UCL"/>
</dbReference>
<dbReference type="GO" id="GO:0032332">
    <property type="term" value="P:positive regulation of chondrocyte differentiation"/>
    <property type="evidence" value="ECO:0000304"/>
    <property type="project" value="BHF-UCL"/>
</dbReference>
<dbReference type="GO" id="GO:0045893">
    <property type="term" value="P:positive regulation of DNA-templated transcription"/>
    <property type="evidence" value="ECO:0000314"/>
    <property type="project" value="HGNC-UCL"/>
</dbReference>
<dbReference type="GO" id="GO:0045603">
    <property type="term" value="P:positive regulation of endothelial cell differentiation"/>
    <property type="evidence" value="ECO:0007669"/>
    <property type="project" value="Ensembl"/>
</dbReference>
<dbReference type="GO" id="GO:0001938">
    <property type="term" value="P:positive regulation of endothelial cell proliferation"/>
    <property type="evidence" value="ECO:0007669"/>
    <property type="project" value="Ensembl"/>
</dbReference>
<dbReference type="GO" id="GO:0030858">
    <property type="term" value="P:positive regulation of epithelial cell differentiation"/>
    <property type="evidence" value="ECO:0000316"/>
    <property type="project" value="BHF-UCL"/>
</dbReference>
<dbReference type="GO" id="GO:0045747">
    <property type="term" value="P:positive regulation of Notch signaling pathway"/>
    <property type="evidence" value="ECO:0000316"/>
    <property type="project" value="BHF-UCL"/>
</dbReference>
<dbReference type="GO" id="GO:0060391">
    <property type="term" value="P:positive regulation of SMAD protein signal transduction"/>
    <property type="evidence" value="ECO:0000315"/>
    <property type="project" value="BHF-UCL"/>
</dbReference>
<dbReference type="GO" id="GO:0045944">
    <property type="term" value="P:positive regulation of transcription by RNA polymerase II"/>
    <property type="evidence" value="ECO:0000314"/>
    <property type="project" value="BHF-UCL"/>
</dbReference>
<dbReference type="GO" id="GO:0008217">
    <property type="term" value="P:regulation of blood pressure"/>
    <property type="evidence" value="ECO:0000315"/>
    <property type="project" value="HGNC-UCL"/>
</dbReference>
<dbReference type="GO" id="GO:0043535">
    <property type="term" value="P:regulation of blood vessel endothelial cell migration"/>
    <property type="evidence" value="ECO:0000304"/>
    <property type="project" value="DFLAT"/>
</dbReference>
<dbReference type="GO" id="GO:0006275">
    <property type="term" value="P:regulation of DNA replication"/>
    <property type="evidence" value="ECO:0000304"/>
    <property type="project" value="DFLAT"/>
</dbReference>
<dbReference type="GO" id="GO:0006355">
    <property type="term" value="P:regulation of DNA-templated transcription"/>
    <property type="evidence" value="ECO:0000315"/>
    <property type="project" value="HGNC-UCL"/>
</dbReference>
<dbReference type="GO" id="GO:0001936">
    <property type="term" value="P:regulation of endothelial cell proliferation"/>
    <property type="evidence" value="ECO:0000304"/>
    <property type="project" value="DFLAT"/>
</dbReference>
<dbReference type="GO" id="GO:0061298">
    <property type="term" value="P:retina vasculature development in camera-type eye"/>
    <property type="evidence" value="ECO:0000250"/>
    <property type="project" value="BHF-UCL"/>
</dbReference>
<dbReference type="GO" id="GO:0007165">
    <property type="term" value="P:signal transduction"/>
    <property type="evidence" value="ECO:0000314"/>
    <property type="project" value="HGNC-UCL"/>
</dbReference>
<dbReference type="GO" id="GO:0007179">
    <property type="term" value="P:transforming growth factor beta receptor signaling pathway"/>
    <property type="evidence" value="ECO:0000314"/>
    <property type="project" value="HGNC-UCL"/>
</dbReference>
<dbReference type="GO" id="GO:0060841">
    <property type="term" value="P:venous blood vessel development"/>
    <property type="evidence" value="ECO:0000250"/>
    <property type="project" value="BHF-UCL"/>
</dbReference>
<dbReference type="GO" id="GO:0035313">
    <property type="term" value="P:wound healing, spreading of epidermal cells"/>
    <property type="evidence" value="ECO:0000315"/>
    <property type="project" value="HGNC-UCL"/>
</dbReference>
<dbReference type="CDD" id="cd14142">
    <property type="entry name" value="STKc_ACVR1_ALK1"/>
    <property type="match status" value="1"/>
</dbReference>
<dbReference type="CDD" id="cd23534">
    <property type="entry name" value="TFP_LU_ECD_ALK1"/>
    <property type="match status" value="1"/>
</dbReference>
<dbReference type="FunFam" id="1.10.510.10:FF:000018">
    <property type="entry name" value="Receptor protein serine/threonine kinase"/>
    <property type="match status" value="1"/>
</dbReference>
<dbReference type="FunFam" id="3.30.200.20:FF:000064">
    <property type="entry name" value="Receptor protein serine/threonine kinase"/>
    <property type="match status" value="1"/>
</dbReference>
<dbReference type="FunFam" id="2.10.60.10:FF:000014">
    <property type="entry name" value="Serine/threonine-protein kinase receptor R3"/>
    <property type="match status" value="1"/>
</dbReference>
<dbReference type="Gene3D" id="2.10.60.10">
    <property type="entry name" value="CD59"/>
    <property type="match status" value="1"/>
</dbReference>
<dbReference type="Gene3D" id="3.30.200.20">
    <property type="entry name" value="Phosphorylase Kinase, domain 1"/>
    <property type="match status" value="1"/>
</dbReference>
<dbReference type="Gene3D" id="1.10.510.10">
    <property type="entry name" value="Transferase(Phosphotransferase) domain 1"/>
    <property type="match status" value="1"/>
</dbReference>
<dbReference type="InterPro" id="IPR003605">
    <property type="entry name" value="GS_dom"/>
</dbReference>
<dbReference type="InterPro" id="IPR011009">
    <property type="entry name" value="Kinase-like_dom_sf"/>
</dbReference>
<dbReference type="InterPro" id="IPR000719">
    <property type="entry name" value="Prot_kinase_dom"/>
</dbReference>
<dbReference type="InterPro" id="IPR017441">
    <property type="entry name" value="Protein_kinase_ATP_BS"/>
</dbReference>
<dbReference type="InterPro" id="IPR001245">
    <property type="entry name" value="Ser-Thr/Tyr_kinase_cat_dom"/>
</dbReference>
<dbReference type="InterPro" id="IPR008271">
    <property type="entry name" value="Ser/Thr_kinase_AS"/>
</dbReference>
<dbReference type="InterPro" id="IPR045860">
    <property type="entry name" value="Snake_toxin-like_sf"/>
</dbReference>
<dbReference type="InterPro" id="IPR000333">
    <property type="entry name" value="TGFB_receptor"/>
</dbReference>
<dbReference type="PANTHER" id="PTHR23255:SF66">
    <property type="entry name" value="SERINE_THREONINE-PROTEIN KINASE RECEPTOR R3"/>
    <property type="match status" value="1"/>
</dbReference>
<dbReference type="PANTHER" id="PTHR23255">
    <property type="entry name" value="TRANSFORMING GROWTH FACTOR-BETA RECEPTOR TYPE I AND II"/>
    <property type="match status" value="1"/>
</dbReference>
<dbReference type="Pfam" id="PF07714">
    <property type="entry name" value="PK_Tyr_Ser-Thr"/>
    <property type="match status" value="1"/>
</dbReference>
<dbReference type="Pfam" id="PF08515">
    <property type="entry name" value="TGF_beta_GS"/>
    <property type="match status" value="1"/>
</dbReference>
<dbReference type="PRINTS" id="PR00653">
    <property type="entry name" value="ACTIVIN2R"/>
</dbReference>
<dbReference type="SMART" id="SM00467">
    <property type="entry name" value="GS"/>
    <property type="match status" value="1"/>
</dbReference>
<dbReference type="SUPFAM" id="SSF56112">
    <property type="entry name" value="Protein kinase-like (PK-like)"/>
    <property type="match status" value="1"/>
</dbReference>
<dbReference type="SUPFAM" id="SSF57302">
    <property type="entry name" value="Snake toxin-like"/>
    <property type="match status" value="1"/>
</dbReference>
<dbReference type="PROSITE" id="PS51256">
    <property type="entry name" value="GS"/>
    <property type="match status" value="1"/>
</dbReference>
<dbReference type="PROSITE" id="PS00107">
    <property type="entry name" value="PROTEIN_KINASE_ATP"/>
    <property type="match status" value="1"/>
</dbReference>
<dbReference type="PROSITE" id="PS50011">
    <property type="entry name" value="PROTEIN_KINASE_DOM"/>
    <property type="match status" value="1"/>
</dbReference>
<dbReference type="PROSITE" id="PS00108">
    <property type="entry name" value="PROTEIN_KINASE_ST"/>
    <property type="match status" value="1"/>
</dbReference>
<reference key="1">
    <citation type="journal article" date="1993" name="Oncogene">
        <title>Activin receptor-like kinases: a novel subclass of cell-surface receptors with predicted serine/threonine kinase activity.</title>
        <authorList>
            <person name="ten Dijke P."/>
            <person name="Ichijo H."/>
            <person name="Franzen P."/>
            <person name="Schulz P."/>
            <person name="Saras J."/>
            <person name="Toyoshima H."/>
            <person name="Heldin C.-H."/>
            <person name="Miyazono K."/>
        </authorList>
    </citation>
    <scope>NUCLEOTIDE SEQUENCE [MRNA]</scope>
    <source>
        <tissue>Placenta</tissue>
    </source>
</reference>
<reference key="2">
    <citation type="journal article" date="1993" name="Cell">
        <title>Identification of human activin and TGF beta type I receptors that form heteromeric kinase complexes with type II receptors.</title>
        <authorList>
            <person name="Attisano L."/>
            <person name="Carcamo J."/>
            <person name="Ventura F."/>
            <person name="Weis F.M."/>
            <person name="Massague J."/>
            <person name="Wrana J.L."/>
        </authorList>
    </citation>
    <scope>NUCLEOTIDE SEQUENCE [MRNA]</scope>
</reference>
<reference key="3">
    <citation type="journal article" date="1997" name="Am. J. Hum. Genet.">
        <title>The activin receptor-like kinase 1 gene: genomic structure and mutations in hereditary hemorrhagic telangiectasia type 2.</title>
        <authorList>
            <person name="Berg J.N."/>
            <person name="Gallione C.J."/>
            <person name="Stenzel T.T."/>
            <person name="Johnson D.W."/>
            <person name="Allen W.P."/>
            <person name="Schwartz C.E."/>
            <person name="Jackson C.E."/>
            <person name="Porteous M.E.M."/>
            <person name="Marchuk D.A."/>
        </authorList>
    </citation>
    <scope>NUCLEOTIDE SEQUENCE [GENOMIC DNA]</scope>
    <scope>VARIANTS HHT2 CYS-50; GLN-67; ILE-333; TRP-374 AND THR-424</scope>
</reference>
<reference key="4">
    <citation type="journal article" date="2006" name="Nature">
        <title>The finished DNA sequence of human chromosome 12.</title>
        <authorList>
            <person name="Scherer S.E."/>
            <person name="Muzny D.M."/>
            <person name="Buhay C.J."/>
            <person name="Chen R."/>
            <person name="Cree A."/>
            <person name="Ding Y."/>
            <person name="Dugan-Rocha S."/>
            <person name="Gill R."/>
            <person name="Gunaratne P."/>
            <person name="Harris R.A."/>
            <person name="Hawes A.C."/>
            <person name="Hernandez J."/>
            <person name="Hodgson A.V."/>
            <person name="Hume J."/>
            <person name="Jackson A."/>
            <person name="Khan Z.M."/>
            <person name="Kovar-Smith C."/>
            <person name="Lewis L.R."/>
            <person name="Lozado R.J."/>
            <person name="Metzker M.L."/>
            <person name="Milosavljevic A."/>
            <person name="Miner G.R."/>
            <person name="Montgomery K.T."/>
            <person name="Morgan M.B."/>
            <person name="Nazareth L.V."/>
            <person name="Scott G."/>
            <person name="Sodergren E."/>
            <person name="Song X.-Z."/>
            <person name="Steffen D."/>
            <person name="Lovering R.C."/>
            <person name="Wheeler D.A."/>
            <person name="Worley K.C."/>
            <person name="Yuan Y."/>
            <person name="Zhang Z."/>
            <person name="Adams C.Q."/>
            <person name="Ansari-Lari M.A."/>
            <person name="Ayele M."/>
            <person name="Brown M.J."/>
            <person name="Chen G."/>
            <person name="Chen Z."/>
            <person name="Clerc-Blankenburg K.P."/>
            <person name="Davis C."/>
            <person name="Delgado O."/>
            <person name="Dinh H.H."/>
            <person name="Draper H."/>
            <person name="Gonzalez-Garay M.L."/>
            <person name="Havlak P."/>
            <person name="Jackson L.R."/>
            <person name="Jacob L.S."/>
            <person name="Kelly S.H."/>
            <person name="Li L."/>
            <person name="Li Z."/>
            <person name="Liu J."/>
            <person name="Liu W."/>
            <person name="Lu J."/>
            <person name="Maheshwari M."/>
            <person name="Nguyen B.-V."/>
            <person name="Okwuonu G.O."/>
            <person name="Pasternak S."/>
            <person name="Perez L.M."/>
            <person name="Plopper F.J.H."/>
            <person name="Santibanez J."/>
            <person name="Shen H."/>
            <person name="Tabor P.E."/>
            <person name="Verduzco D."/>
            <person name="Waldron L."/>
            <person name="Wang Q."/>
            <person name="Williams G.A."/>
            <person name="Zhang J."/>
            <person name="Zhou J."/>
            <person name="Allen C.C."/>
            <person name="Amin A.G."/>
            <person name="Anyalebechi V."/>
            <person name="Bailey M."/>
            <person name="Barbaria J.A."/>
            <person name="Bimage K.E."/>
            <person name="Bryant N.P."/>
            <person name="Burch P.E."/>
            <person name="Burkett C.E."/>
            <person name="Burrell K.L."/>
            <person name="Calderon E."/>
            <person name="Cardenas V."/>
            <person name="Carter K."/>
            <person name="Casias K."/>
            <person name="Cavazos I."/>
            <person name="Cavazos S.R."/>
            <person name="Ceasar H."/>
            <person name="Chacko J."/>
            <person name="Chan S.N."/>
            <person name="Chavez D."/>
            <person name="Christopoulos C."/>
            <person name="Chu J."/>
            <person name="Cockrell R."/>
            <person name="Cox C.D."/>
            <person name="Dang M."/>
            <person name="Dathorne S.R."/>
            <person name="David R."/>
            <person name="Davis C.M."/>
            <person name="Davy-Carroll L."/>
            <person name="Deshazo D.R."/>
            <person name="Donlin J.E."/>
            <person name="D'Souza L."/>
            <person name="Eaves K.A."/>
            <person name="Egan A."/>
            <person name="Emery-Cohen A.J."/>
            <person name="Escotto M."/>
            <person name="Flagg N."/>
            <person name="Forbes L.D."/>
            <person name="Gabisi A.M."/>
            <person name="Garza M."/>
            <person name="Hamilton C."/>
            <person name="Henderson N."/>
            <person name="Hernandez O."/>
            <person name="Hines S."/>
            <person name="Hogues M.E."/>
            <person name="Huang M."/>
            <person name="Idlebird D.G."/>
            <person name="Johnson R."/>
            <person name="Jolivet A."/>
            <person name="Jones S."/>
            <person name="Kagan R."/>
            <person name="King L.M."/>
            <person name="Leal B."/>
            <person name="Lebow H."/>
            <person name="Lee S."/>
            <person name="LeVan J.M."/>
            <person name="Lewis L.C."/>
            <person name="London P."/>
            <person name="Lorensuhewa L.M."/>
            <person name="Loulseged H."/>
            <person name="Lovett D.A."/>
            <person name="Lucier A."/>
            <person name="Lucier R.L."/>
            <person name="Ma J."/>
            <person name="Madu R.C."/>
            <person name="Mapua P."/>
            <person name="Martindale A.D."/>
            <person name="Martinez E."/>
            <person name="Massey E."/>
            <person name="Mawhiney S."/>
            <person name="Meador M.G."/>
            <person name="Mendez S."/>
            <person name="Mercado C."/>
            <person name="Mercado I.C."/>
            <person name="Merritt C.E."/>
            <person name="Miner Z.L."/>
            <person name="Minja E."/>
            <person name="Mitchell T."/>
            <person name="Mohabbat F."/>
            <person name="Mohabbat K."/>
            <person name="Montgomery B."/>
            <person name="Moore N."/>
            <person name="Morris S."/>
            <person name="Munidasa M."/>
            <person name="Ngo R.N."/>
            <person name="Nguyen N.B."/>
            <person name="Nickerson E."/>
            <person name="Nwaokelemeh O.O."/>
            <person name="Nwokenkwo S."/>
            <person name="Obregon M."/>
            <person name="Oguh M."/>
            <person name="Oragunye N."/>
            <person name="Oviedo R.J."/>
            <person name="Parish B.J."/>
            <person name="Parker D.N."/>
            <person name="Parrish J."/>
            <person name="Parks K.L."/>
            <person name="Paul H.A."/>
            <person name="Payton B.A."/>
            <person name="Perez A."/>
            <person name="Perrin W."/>
            <person name="Pickens A."/>
            <person name="Primus E.L."/>
            <person name="Pu L.-L."/>
            <person name="Puazo M."/>
            <person name="Quiles M.M."/>
            <person name="Quiroz J.B."/>
            <person name="Rabata D."/>
            <person name="Reeves K."/>
            <person name="Ruiz S.J."/>
            <person name="Shao H."/>
            <person name="Sisson I."/>
            <person name="Sonaike T."/>
            <person name="Sorelle R.P."/>
            <person name="Sutton A.E."/>
            <person name="Svatek A.F."/>
            <person name="Svetz L.A."/>
            <person name="Tamerisa K.S."/>
            <person name="Taylor T.R."/>
            <person name="Teague B."/>
            <person name="Thomas N."/>
            <person name="Thorn R.D."/>
            <person name="Trejos Z.Y."/>
            <person name="Trevino B.K."/>
            <person name="Ukegbu O.N."/>
            <person name="Urban J.B."/>
            <person name="Vasquez L.I."/>
            <person name="Vera V.A."/>
            <person name="Villasana D.M."/>
            <person name="Wang L."/>
            <person name="Ward-Moore S."/>
            <person name="Warren J.T."/>
            <person name="Wei X."/>
            <person name="White F."/>
            <person name="Williamson A.L."/>
            <person name="Wleczyk R."/>
            <person name="Wooden H.S."/>
            <person name="Wooden S.H."/>
            <person name="Yen J."/>
            <person name="Yoon L."/>
            <person name="Yoon V."/>
            <person name="Zorrilla S.E."/>
            <person name="Nelson D."/>
            <person name="Kucherlapati R."/>
            <person name="Weinstock G."/>
            <person name="Gibbs R.A."/>
        </authorList>
    </citation>
    <scope>NUCLEOTIDE SEQUENCE [LARGE SCALE GENOMIC DNA]</scope>
</reference>
<reference key="5">
    <citation type="submission" date="2005-07" db="EMBL/GenBank/DDBJ databases">
        <authorList>
            <person name="Mural R.J."/>
            <person name="Istrail S."/>
            <person name="Sutton G.G."/>
            <person name="Florea L."/>
            <person name="Halpern A.L."/>
            <person name="Mobarry C.M."/>
            <person name="Lippert R."/>
            <person name="Walenz B."/>
            <person name="Shatkay H."/>
            <person name="Dew I."/>
            <person name="Miller J.R."/>
            <person name="Flanigan M.J."/>
            <person name="Edwards N.J."/>
            <person name="Bolanos R."/>
            <person name="Fasulo D."/>
            <person name="Halldorsson B.V."/>
            <person name="Hannenhalli S."/>
            <person name="Turner R."/>
            <person name="Yooseph S."/>
            <person name="Lu F."/>
            <person name="Nusskern D.R."/>
            <person name="Shue B.C."/>
            <person name="Zheng X.H."/>
            <person name="Zhong F."/>
            <person name="Delcher A.L."/>
            <person name="Huson D.H."/>
            <person name="Kravitz S.A."/>
            <person name="Mouchard L."/>
            <person name="Reinert K."/>
            <person name="Remington K.A."/>
            <person name="Clark A.G."/>
            <person name="Waterman M.S."/>
            <person name="Eichler E.E."/>
            <person name="Adams M.D."/>
            <person name="Hunkapiller M.W."/>
            <person name="Myers E.W."/>
            <person name="Venter J.C."/>
        </authorList>
    </citation>
    <scope>NUCLEOTIDE SEQUENCE [LARGE SCALE GENOMIC DNA]</scope>
</reference>
<reference key="6">
    <citation type="journal article" date="2004" name="Genome Res.">
        <title>The status, quality, and expansion of the NIH full-length cDNA project: the Mammalian Gene Collection (MGC).</title>
        <authorList>
            <consortium name="The MGC Project Team"/>
        </authorList>
    </citation>
    <scope>NUCLEOTIDE SEQUENCE [LARGE SCALE MRNA]</scope>
    <source>
        <tissue>Brain</tissue>
    </source>
</reference>
<reference key="7">
    <citation type="journal article" date="2011" name="Mol. Cell. Biol.">
        <title>TSC-22 promotes transforming growth factor beta-mediated cardiac myofibroblast differentiation by antagonizing Smad7 activity.</title>
        <authorList>
            <person name="Yan X."/>
            <person name="Zhang J."/>
            <person name="Pan L."/>
            <person name="Wang P."/>
            <person name="Xue H."/>
            <person name="Zhang L."/>
            <person name="Gao X."/>
            <person name="Zhao X."/>
            <person name="Ning Y."/>
            <person name="Chen Y.G."/>
        </authorList>
    </citation>
    <scope>INTERACTION WITH TSC22D1</scope>
</reference>
<reference key="8">
    <citation type="journal article" date="2012" name="Biochemistry">
        <title>Structure of the Alk1 extracellular domain and characterization of its bone morphogenetic protein (BMP) binding properties.</title>
        <authorList>
            <person name="Mahlawat P."/>
            <person name="Ilangovan U."/>
            <person name="Biswas T."/>
            <person name="Sun L.Z."/>
            <person name="Hinck A.P."/>
        </authorList>
    </citation>
    <scope>STRUCTURE BY NMR OF 19-118</scope>
    <scope>FUNCTION AS BMP9 RECEPTOR</scope>
    <scope>DISULFIDE BONDS</scope>
    <scope>MUTAGENESIS OF 74-ARG--LEU-76</scope>
</reference>
<reference key="9">
    <citation type="journal article" date="2012" name="J. Biol. Chem.">
        <title>Specificity and structure of a high affinity activin receptor-like kinase 1 (ALK1) signaling complex.</title>
        <authorList>
            <person name="Townson S.A."/>
            <person name="Martinez-Hackert E."/>
            <person name="Greppi C."/>
            <person name="Lowden P."/>
            <person name="Sako D."/>
            <person name="Liu J."/>
            <person name="Ucran J.A."/>
            <person name="Liharska K."/>
            <person name="Underwood K.W."/>
            <person name="Seehra J."/>
            <person name="Kumar R."/>
            <person name="Grinberg A.V."/>
        </authorList>
    </citation>
    <scope>X-RAY CRYSTALLOGRAPHY (3.36 ANGSTROMS) OF 22-118 IN COMPLEX WITH BMP9 AND ACVR2B</scope>
    <scope>FUNCTION AS BMP9 AND BMP10 RECEPTOR</scope>
    <scope>DISULFIDE BONDS</scope>
</reference>
<reference key="10">
    <citation type="journal article" date="1996" name="Nat. Genet.">
        <title>Mutations in the activin receptor-like kinase 1 gene in hereditary haemorrhagic telangiectasia type 2.</title>
        <authorList>
            <person name="Johnson D.W."/>
            <person name="Berg J.N."/>
            <person name="Baldwin M.A."/>
            <person name="Gallione C.J."/>
            <person name="Marondel I."/>
            <person name="Yoon S.-J."/>
            <person name="Stenzel T.T."/>
            <person name="Speer M."/>
            <person name="Pericak-Vance M.A."/>
            <person name="Diamond A."/>
            <person name="Guttmacher A.E."/>
            <person name="Jackson C.E."/>
            <person name="Attisano L."/>
            <person name="Kucherlapati R."/>
            <person name="Porteous M.E.M."/>
            <person name="Marchuk D.A."/>
        </authorList>
    </citation>
    <scope>VARIANTS HHT2 SER-232 DEL; ARG-376 AND GLN-411</scope>
</reference>
<reference key="11">
    <citation type="journal article" date="1998" name="Hum. Mutat.">
        <title>Novel missense and frameshift mutations in the activin receptor-like kinase-1 gene in hereditary hemorrhagic telangiectasia.</title>
        <authorList>
            <person name="Klaus D.J."/>
            <person name="Gallione C.J."/>
            <person name="Anthony K."/>
            <person name="Yeh E.Y."/>
            <person name="Yu J."/>
            <person name="Lux A."/>
            <person name="Johnson D.W."/>
            <person name="Marchuk D.A."/>
        </authorList>
    </citation>
    <scope>VARIANTS HHT2 TYR-51; TRP-77 AND ASP-96</scope>
</reference>
<reference key="12">
    <citation type="journal article" date="2000" name="Hum. Mol. Genet.">
        <title>Analysis of ALK-1 and endoglin in newborns from families with hereditary hemorrhagic telangiectasia type 2.</title>
        <authorList>
            <person name="Abdalla S.A."/>
            <person name="Pece-Barbara N."/>
            <person name="Vera S."/>
            <person name="Tapia E."/>
            <person name="Paez E."/>
            <person name="Bernabeu C."/>
            <person name="Letarte M."/>
        </authorList>
    </citation>
    <scope>VARIANTS HHT2 48-GLY-ALA-49 DELINS GLU-PRO; CYS-50; SER-232 DEL; ILE-333; TYR-344 AND ASP-407</scope>
</reference>
<reference key="13">
    <citation type="journal article" date="2001" name="Am. J. Med. Genet.">
        <title>Mutations in the ALK-1 gene and the phenotype of hereditary hemorrhagic telangiectasia in two large Danish families.</title>
        <authorList>
            <person name="Kjeldsen A.D."/>
            <person name="Brusgaard K."/>
            <person name="Poulsen L."/>
            <person name="Kruse T."/>
            <person name="Rasmussen K."/>
            <person name="Green A."/>
            <person name="Vase P."/>
        </authorList>
    </citation>
    <scope>VARIANTS HHT2 TRP-374 AND ASN-398</scope>
</reference>
<reference key="14">
    <citation type="journal article" date="2001" name="N. Engl. J. Med.">
        <title>Clinical and molecular genetic features of pulmonary hypertension in patients with hereditary hemorrhagic telangiectasia.</title>
        <authorList>
            <person name="Trembath R.C."/>
            <person name="Thomson J.R."/>
            <person name="Machado R.D."/>
            <person name="Morgan N.V."/>
            <person name="Atkinson C."/>
            <person name="Winship I."/>
            <person name="Simonneau G."/>
            <person name="Galie N."/>
            <person name="Loyd J.E."/>
            <person name="Humbert M."/>
            <person name="Nichols W.C."/>
            <person name="Berg J."/>
            <person name="Manes A."/>
            <person name="McGaughran J."/>
            <person name="Pauciulo M."/>
            <person name="Wheeler L."/>
            <person name="Morrell N.W."/>
        </authorList>
    </citation>
    <scope>VARIANTS HHT2 ASP-254 DEL; TRP-411 AND TRP-484</scope>
</reference>
<reference key="15">
    <citation type="journal article" date="2003" name="J. Med. Genet.">
        <title>Molecular and functional analysis identifies ALK-1 as the predominant cause of pulmonary hypertension related to hereditary haemorrhagic telangiectasia.</title>
        <authorList>
            <person name="Harrison R.E."/>
            <person name="Flanagan J.A."/>
            <person name="Sankelo M."/>
            <person name="Abdalla S.A."/>
            <person name="Rowell J."/>
            <person name="Machado R.D."/>
            <person name="Elliott C.G."/>
            <person name="Robbins I.M."/>
            <person name="Olschewski H."/>
            <person name="McLaughlin V."/>
            <person name="Gruenig E."/>
            <person name="Kermeen F."/>
            <person name="Halme M."/>
            <person name="Raeisaenen-Sokolowski A."/>
            <person name="Laitinen T."/>
            <person name="Morrell N.W."/>
            <person name="Trembath R.C."/>
        </authorList>
    </citation>
    <scope>VARIANTS HHT2 ALA-179; ASP-211; TYR-344; TRP-374; GLN-374; SER-399; GLN-411 AND THR-487</scope>
    <scope>CHARACTERIZATION OF VARIANTS HHT2 CYS-50; GLN-67; TRP-77; ALA-179; ASP-211; SER-232 DEL; ASP-254 DEL; ILE-333; TYR-344; GLN-374; LEU-378; GLN-411 AND THR-487</scope>
</reference>
<reference key="16">
    <citation type="journal article" date="2004" name="J. Med. Genet.">
        <authorList>
            <person name="Harrison R.E."/>
            <person name="Flanagan J.A."/>
            <person name="Sankelo M."/>
            <person name="Abdalla S.A."/>
            <person name="Rowell J."/>
            <person name="Machado R.D."/>
            <person name="Elliott C.G."/>
            <person name="Robbins I.M."/>
            <person name="Olschewski H."/>
            <person name="McLaughlin V."/>
            <person name="Gruenig E."/>
            <person name="Kermeen F."/>
            <person name="Halme M."/>
            <person name="Raeisaenen-Sokolowski A."/>
            <person name="Laitinen T."/>
            <person name="Morrell N.W."/>
            <person name="Trembath R.C."/>
        </authorList>
    </citation>
    <scope>ERRATUM OF PUBMED:14684682</scope>
</reference>
<reference key="17">
    <citation type="journal article" date="2004" name="Hum. Mutat.">
        <title>Molecular screening of ALK1/ACVRL1 and ENG genes in hereditary hemorrhagic telangiectasia in France.</title>
        <authorList>
            <consortium name="French Rendu-Osler network"/>
            <person name="Lesca G."/>
            <person name="Plauchu H."/>
            <person name="Coulet F."/>
            <person name="Lefebvre S."/>
            <person name="Plessis G."/>
            <person name="Odent S."/>
            <person name="Riviere S."/>
            <person name="Leheup B."/>
            <person name="Goizet C."/>
            <person name="Carette M.-F."/>
            <person name="Cordier J.-F."/>
            <person name="Pinson S."/>
            <person name="Soubrier F."/>
            <person name="Calender A."/>
            <person name="Giraud S."/>
        </authorList>
    </citation>
    <scope>VARIANTS HHT2 ARG-48; LYS-215; ARG-223; ARG-229; SER-233 DEL; PHE-285; PRO-306; TYR-314; PRO-337; PRO-347; GLN-374; VAL-376; LYS-379; GLY-397; TRP-411; PRO-411; GLN-411; LEU-425; LEU-479; VAL-482 AND TRP-484</scope>
</reference>
<reference key="18">
    <citation type="journal article" date="2005" name="Hum. Mutat.">
        <title>Hepatic manifestation is associated with ALK1 in hereditary hemorrhagic telangiectasia: identification of five novel ALK1 and one novel ENG mutations.</title>
        <authorList>
            <person name="Kuehl H.K.A."/>
            <person name="Caselitz M."/>
            <person name="Hasenkamp S."/>
            <person name="Wagner S."/>
            <person name="El-Harith E.-H.A."/>
            <person name="Manns M.P."/>
            <person name="Stuhrmann M."/>
        </authorList>
    </citation>
    <scope>VARIANTS HHT2 TRP-67; TRP-374; LYS-379; ASP-407; TRP-411; VAL-425 AND PHE-425 DEL</scope>
</reference>
<reference key="19">
    <citation type="journal article" date="2006" name="Hum. Mutat.">
        <title>Novel mutations in ENG and ACVRL1 identified in a series of 200 individuals undergoing clinical genetic testing for hereditary hemorrhagic telangiectasia (HHT): correlation of genotype with phenotype.</title>
        <authorList>
            <person name="Bossler A.D."/>
            <person name="Richards J."/>
            <person name="George C."/>
            <person name="Godmilow L."/>
            <person name="Ganguly A."/>
        </authorList>
    </citation>
    <scope>VARIANT SER-30</scope>
    <scope>VARIANTS HHT2 TYR-34; ALA-52; ILE-197; ASP-219; LYS-237; LEU-260; PRO-289; ARG-344; CYS-426 AND ARG-433</scope>
</reference>
<reference key="20">
    <citation type="journal article" date="2006" name="Int. J. Mol. Med.">
        <title>Novel mutations in the ENG and ACVRL1 genes causing hereditary hemorrhagic teleangiectasia.</title>
        <authorList>
            <person name="Argyriou L."/>
            <person name="Twelkemeyer S."/>
            <person name="Panchulidze I."/>
            <person name="Wehner L.E."/>
            <person name="Teske U."/>
            <person name="Engel W."/>
            <person name="Nayernia K."/>
        </authorList>
    </citation>
    <scope>VARIANTS HHT2 GLY-50; PRO-66; ARG-69; TYR-176; LEU-233; PRO-265; PRO-403 AND SER-416</scope>
</reference>
<reference key="21">
    <citation type="journal article" date="2010" name="Hum. Genet.">
        <title>Update on molecular diagnosis of hereditary hemorrhagic telangiectasia.</title>
        <authorList>
            <person name="Richards-Yutz J."/>
            <person name="Grant K."/>
            <person name="Chao E.C."/>
            <person name="Walther S.E."/>
            <person name="Ganguly A."/>
        </authorList>
    </citation>
    <scope>VARIANTS CYS-38; PRO-138; LYS-277; PRO-342; THR-400 AND GLU-486</scope>
    <scope>VARIANTS HHT2 SER-96; GLY-217; GLU-226; ARG-280; ARG-294; GLN-328; HIS-335; ASP-347; SER-378; ARG-424; SER-449 AND PRO-479</scope>
</reference>
<reference key="22">
    <citation type="journal article" date="2014" name="PLoS ONE">
        <title>Novel mutations in BMPR2, ACVRL1 and KCNA5 genes and hemodynamic parameters in patients with pulmonary arterial hypertension.</title>
        <authorList>
            <person name="Pousada G."/>
            <person name="Baloira A."/>
            <person name="Vilarino C."/>
            <person name="Cifrian J.M."/>
            <person name="Valverde D."/>
        </authorList>
    </citation>
    <scope>VARIANTS ASN-8; VAL-59; VAL-159; CYS-225 AND ALA-396</scope>
</reference>
<reference key="23">
    <citation type="journal article" date="2015" name="PLoS ONE">
        <title>Functional and splicing defect analysis of 23 ACVRL1 mutations in a cohort of patients affected by hereditary hemorrhagic telangiectasia.</title>
        <authorList>
            <person name="Alaa El Din F."/>
            <person name="Patri S."/>
            <person name="Thoreau V."/>
            <person name="Rodriguez-Ballesteros M."/>
            <person name="Hamade E."/>
            <person name="Bailly S."/>
            <person name="Gilbert-Dussardier B."/>
            <person name="Abou Merhi R."/>
            <person name="Kitzis A."/>
        </authorList>
    </citation>
    <scope>VARIANTS HHT2 GLY-41; TYR-41; GLY-46; PRO-47; TYR-66; PHE-77; ASP-211; SER-211; VAL-245; PRO-306; VAL-313; TYR-314; SER-378; ASP-379; LYS-379; GLY-404; TRP-411; MET-441 AND TYR-443</scope>
    <scope>VARIANTS ASP-111 AND PHE-417</scope>
    <scope>CHARACTERIZATION OF VARIANTS HHT2 GLY-41; TYR-41; GLY-46; PRO-47; TYR-66; PHE-77; ASP-211; SER-211; VAL-245; PRO-306; VAL-313; TYR-314; SER-378; ASP-379; LYS-379; GLY-404; TRP-411; MET-441 AND TYR-443</scope>
    <scope>CHARACTERIZATION OF VARIANTS ASP-111 AND PHE-417</scope>
    <scope>FUNCTION</scope>
    <scope>SUBCELLULAR LOCATION</scope>
</reference>
<name>ACVL1_HUMAN</name>
<feature type="signal peptide" evidence="3">
    <location>
        <begin position="1"/>
        <end position="21"/>
    </location>
</feature>
<feature type="chain" id="PRO_0000024420" description="Activin receptor type-1-like">
    <location>
        <begin position="22"/>
        <end position="503"/>
    </location>
</feature>
<feature type="topological domain" description="Extracellular" evidence="3">
    <location>
        <begin position="22"/>
        <end position="118"/>
    </location>
</feature>
<feature type="transmembrane region" description="Helical" evidence="3">
    <location>
        <begin position="119"/>
        <end position="141"/>
    </location>
</feature>
<feature type="topological domain" description="Cytoplasmic" evidence="3">
    <location>
        <begin position="142"/>
        <end position="503"/>
    </location>
</feature>
<feature type="domain" description="GS" evidence="5">
    <location>
        <begin position="172"/>
        <end position="201"/>
    </location>
</feature>
<feature type="domain" description="Protein kinase" evidence="4">
    <location>
        <begin position="202"/>
        <end position="492"/>
    </location>
</feature>
<feature type="region of interest" description="Mediates specificity for BMP ligand">
    <location>
        <begin position="73"/>
        <end position="76"/>
    </location>
</feature>
<feature type="active site" description="Proton acceptor" evidence="4 6">
    <location>
        <position position="330"/>
    </location>
</feature>
<feature type="binding site" evidence="4">
    <location>
        <begin position="208"/>
        <end position="216"/>
    </location>
    <ligand>
        <name>ATP</name>
        <dbReference type="ChEBI" id="CHEBI:30616"/>
    </ligand>
</feature>
<feature type="binding site" evidence="4">
    <location>
        <position position="229"/>
    </location>
    <ligand>
        <name>ATP</name>
        <dbReference type="ChEBI" id="CHEBI:30616"/>
    </ligand>
</feature>
<feature type="modified residue" description="Phosphoserine" evidence="2">
    <location>
        <position position="155"/>
    </location>
</feature>
<feature type="modified residue" description="Phosphoserine" evidence="2">
    <location>
        <position position="160"/>
    </location>
</feature>
<feature type="modified residue" description="Phosphoserine" evidence="2">
    <location>
        <position position="161"/>
    </location>
</feature>
<feature type="glycosylation site" description="N-linked (GlcNAc...) asparagine" evidence="3">
    <location>
        <position position="98"/>
    </location>
</feature>
<feature type="disulfide bond" evidence="18 19 25 26">
    <location>
        <begin position="34"/>
        <end position="51"/>
    </location>
</feature>
<feature type="disulfide bond" evidence="18 19 25 26">
    <location>
        <begin position="36"/>
        <end position="41"/>
    </location>
</feature>
<feature type="disulfide bond" evidence="18 19 25 26">
    <location>
        <begin position="46"/>
        <end position="69"/>
    </location>
</feature>
<feature type="disulfide bond" evidence="18 19 25 26">
    <location>
        <begin position="77"/>
        <end position="89"/>
    </location>
</feature>
<feature type="disulfide bond" evidence="18 19 25 26">
    <location>
        <begin position="90"/>
        <end position="95"/>
    </location>
</feature>
<feature type="sequence variant" id="VAR_079583" evidence="20">
    <original>K</original>
    <variation>N</variation>
    <location>
        <position position="8"/>
    </location>
</feature>
<feature type="sequence variant" id="VAR_070308" description="In dbSNP:rs149664056." evidence="15">
    <original>P</original>
    <variation>S</variation>
    <location>
        <position position="30"/>
    </location>
</feature>
<feature type="sequence variant" id="VAR_070309" description="In HHT2." evidence="15">
    <original>C</original>
    <variation>Y</variation>
    <location>
        <position position="34"/>
    </location>
</feature>
<feature type="sequence variant" id="VAR_070310" evidence="16">
    <original>S</original>
    <variation>C</variation>
    <location>
        <position position="38"/>
    </location>
</feature>
<feature type="sequence variant" id="VAR_075231" description="In HHT2; loss of receptor activity in response to BMP9; predominantly retained in the endoplasmic reticulum." evidence="21">
    <original>C</original>
    <variation>G</variation>
    <location>
        <position position="41"/>
    </location>
</feature>
<feature type="sequence variant" id="VAR_075232" description="In HHT2; loss of receptor activity in response to BMP9; predominantly retained in the endoplasmic reticulum; dbSNP:rs1184716348." evidence="21">
    <original>C</original>
    <variation>Y</variation>
    <location>
        <position position="41"/>
    </location>
</feature>
<feature type="sequence variant" id="VAR_075233" description="In HHT2; loss of receptor activity in response to BMP9; retained in the endoplasmic reticulum." evidence="21">
    <original>C</original>
    <variation>G</variation>
    <location>
        <position position="46"/>
    </location>
</feature>
<feature type="sequence variant" id="VAR_075234" description="In HHT2; loss of receptor activity in response to BMP9; retained in the endoplasmic reticulum; dbSNP:rs774389618." evidence="21">
    <original>R</original>
    <variation>P</variation>
    <location>
        <position position="47"/>
    </location>
</feature>
<feature type="sequence variant" id="VAR_026784" description="In HHT2; dbSNP:rs387906392." evidence="8">
    <original>GA</original>
    <variation>EP</variation>
    <location>
        <begin position="48"/>
        <end position="49"/>
    </location>
</feature>
<feature type="sequence variant" id="VAR_026785" description="In HHT2." evidence="12">
    <original>G</original>
    <variation>R</variation>
    <location>
        <position position="48"/>
    </location>
</feature>
<feature type="sequence variant" id="VAR_006204" description="In HHT2; retained in the endoplasmic reticulum; dbSNP:rs121909285." evidence="8 11 23">
    <original>W</original>
    <variation>C</variation>
    <location>
        <position position="50"/>
    </location>
</feature>
<feature type="sequence variant" id="VAR_070311" description="In HHT2." evidence="14">
    <original>W</original>
    <variation>G</variation>
    <location>
        <position position="50"/>
    </location>
</feature>
<feature type="sequence variant" id="VAR_006205" description="In HHT2; dbSNP:rs863223409." evidence="7">
    <original>C</original>
    <variation>Y</variation>
    <location>
        <position position="51"/>
    </location>
</feature>
<feature type="sequence variant" id="VAR_070312" description="In HHT2; dbSNP:rs1131691346." evidence="15">
    <original>T</original>
    <variation>A</variation>
    <location>
        <position position="52"/>
    </location>
</feature>
<feature type="sequence variant" id="VAR_079584" description="Found in a patient with pulmonary arterial hypertension; uncertain significance; dbSNP:rs1466116430." evidence="20">
    <original>E</original>
    <variation>V</variation>
    <location>
        <position position="59"/>
    </location>
</feature>
<feature type="sequence variant" id="VAR_070313" description="In HHT2." evidence="14">
    <original>H</original>
    <variation>P</variation>
    <location>
        <position position="66"/>
    </location>
</feature>
<feature type="sequence variant" id="VAR_075235" description="In HHT2; loss of receptor activity in response to BMP9; retained in the endoplasmic reticulum; dbSNP:rs1480110873." evidence="21">
    <original>H</original>
    <variation>Y</variation>
    <location>
        <position position="66"/>
    </location>
</feature>
<feature type="sequence variant" id="VAR_006206" description="In HHT2; retained in the endoplasmic reticulum; dbSNP:rs863223414." evidence="11 23">
    <original>R</original>
    <variation>Q</variation>
    <location>
        <position position="67"/>
    </location>
</feature>
<feature type="sequence variant" id="VAR_026786" description="In HHT2; dbSNP:rs1085307405." evidence="13">
    <original>R</original>
    <variation>W</variation>
    <location>
        <position position="67"/>
    </location>
</feature>
<feature type="sequence variant" id="VAR_070314" description="In HHT2." evidence="14">
    <original>C</original>
    <variation>R</variation>
    <location>
        <position position="69"/>
    </location>
</feature>
<feature type="sequence variant" id="VAR_075236" description="In HHT2; loss of receptor activity in response to BMP9; retained in the endoplasmic reticulum; dbSNP:rs1330837892." evidence="21">
    <original>C</original>
    <variation>F</variation>
    <location>
        <position position="77"/>
    </location>
</feature>
<feature type="sequence variant" id="VAR_006207" description="In HHT2; retained in the endoplasmic reticulum." evidence="7 11">
    <original>C</original>
    <variation>W</variation>
    <location>
        <position position="77"/>
    </location>
</feature>
<feature type="sequence variant" id="VAR_006208" description="In HHT2." evidence="7">
    <original>N</original>
    <variation>D</variation>
    <location>
        <position position="96"/>
    </location>
</feature>
<feature type="sequence variant" id="VAR_070315" description="In HHT2." evidence="16">
    <original>N</original>
    <variation>S</variation>
    <location>
        <position position="96"/>
    </location>
</feature>
<feature type="sequence variant" id="VAR_075237" description="No loss of receptor activity in response to BMP9; mutant protein is capable of targeting the cell surface appropriately; dbSNP:rs1481094868." evidence="21">
    <original>E</original>
    <variation>D</variation>
    <location>
        <position position="111"/>
    </location>
</feature>
<feature type="sequence variant" id="VAR_070316" evidence="16">
    <original>L</original>
    <variation>P</variation>
    <location>
        <position position="138"/>
    </location>
</feature>
<feature type="sequence variant" id="VAR_079585" description="Found in a patient with pulmonary arterial hypertension; uncertain significance." evidence="20">
    <original>E</original>
    <variation>V</variation>
    <location>
        <position position="159"/>
    </location>
</feature>
<feature type="sequence variant" id="VAR_070317" description="In HHT2." evidence="14">
    <original>D</original>
    <variation>Y</variation>
    <location>
        <position position="176"/>
    </location>
</feature>
<feature type="sequence variant" id="VAR_026787" description="In HHT2; mutant protein is capable of targeting the cell surface appropriately; dbSNP:rs753792569." evidence="11">
    <original>D</original>
    <variation>A</variation>
    <location>
        <position position="179"/>
    </location>
</feature>
<feature type="sequence variant" id="VAR_070318" description="In HHT2." evidence="15">
    <original>T</original>
    <variation>I</variation>
    <location>
        <position position="197"/>
    </location>
</feature>
<feature type="sequence variant" id="VAR_026788" description="In HHT2; loss of receptor activity in response to BMP9; retained in the endoplasmic reticulum; dbSNP:rs28936687." evidence="11 21">
    <original>G</original>
    <variation>D</variation>
    <location>
        <position position="211"/>
    </location>
</feature>
<feature type="sequence variant" id="VAR_075238" description="In HHT2; loss of receptor activity in response to BMP9; retained in the endoplasmic reticulum." evidence="21">
    <original>G</original>
    <variation>S</variation>
    <location>
        <position position="211"/>
    </location>
</feature>
<feature type="sequence variant" id="VAR_026789" description="In HHT2; dbSNP:rs754283265." evidence="12">
    <original>E</original>
    <variation>K</variation>
    <location>
        <position position="215"/>
    </location>
</feature>
<feature type="sequence variant" id="VAR_070319" description="In HHT2." evidence="16">
    <original>W</original>
    <variation>G</variation>
    <location>
        <position position="217"/>
    </location>
</feature>
<feature type="sequence variant" id="VAR_070320" description="In HHT2." evidence="15">
    <original>G</original>
    <variation>D</variation>
    <location>
        <position position="219"/>
    </location>
</feature>
<feature type="sequence variant" id="VAR_026790" description="In HHT2." evidence="12">
    <original>G</original>
    <variation>R</variation>
    <location>
        <position position="223"/>
    </location>
</feature>
<feature type="sequence variant" id="VAR_079586" description="Found in a patient with pulmonary arterial hypertension; uncertain significance." evidence="20">
    <original>S</original>
    <variation>C</variation>
    <location>
        <position position="225"/>
    </location>
</feature>
<feature type="sequence variant" id="VAR_070321" description="In HHT2; dbSNP:rs1565593639." evidence="16">
    <original>V</original>
    <variation>E</variation>
    <location>
        <position position="226"/>
    </location>
</feature>
<feature type="sequence variant" id="VAR_026791" description="In HHT2." evidence="12">
    <original>K</original>
    <variation>R</variation>
    <location>
        <position position="229"/>
    </location>
</feature>
<feature type="sequence variant" id="VAR_006209" description="In HHT2; mutant protein is capable of targeting the cell surface appropriately." evidence="8 11 22">
    <location>
        <position position="232"/>
    </location>
</feature>
<feature type="sequence variant" id="VAR_070322" description="In HHT2; dbSNP:rs762773076." evidence="14">
    <original>S</original>
    <variation>L</variation>
    <location>
        <position position="233"/>
    </location>
</feature>
<feature type="sequence variant" id="VAR_026792" description="In HHT2." evidence="12">
    <location>
        <position position="233"/>
    </location>
</feature>
<feature type="sequence variant" id="VAR_070323" description="In HHT2." evidence="15">
    <original>Q</original>
    <variation>K</variation>
    <location>
        <position position="237"/>
    </location>
</feature>
<feature type="sequence variant" id="VAR_011717" description="In dbSNP:rs1804508.">
    <original>I</original>
    <variation>N</variation>
    <location>
        <position position="245"/>
    </location>
</feature>
<feature type="sequence variant" id="VAR_075239" description="In HHT2; no loss of receptor activity in response to BMP9; mutant protein is capable of targeting the cell surface appropriately; affects splicing by inducing the creation of a new donor splice site and the loss of the 3' end of exon 6." evidence="21">
    <original>I</original>
    <variation>V</variation>
    <location>
        <position position="245"/>
    </location>
</feature>
<feature type="sequence variant" id="VAR_026793" description="In HHT2; retained in the endoplasmic reticulum; dbSNP:rs387906393." evidence="10 11">
    <location>
        <position position="254"/>
    </location>
</feature>
<feature type="sequence variant" id="VAR_070324" description="In HHT2." evidence="15">
    <original>I</original>
    <variation>L</variation>
    <location>
        <position position="260"/>
    </location>
</feature>
<feature type="sequence variant" id="VAR_070325" description="In HHT2; dbSNP:rs1592223978." evidence="14">
    <original>T</original>
    <variation>P</variation>
    <location>
        <position position="265"/>
    </location>
</feature>
<feature type="sequence variant" id="VAR_070326" description="Found in a patient with hereditary hemorrhagic talagiectasia; uncertain significance." evidence="16">
    <original>T</original>
    <variation>K</variation>
    <location>
        <position position="277"/>
    </location>
</feature>
<feature type="sequence variant" id="VAR_070327" description="In HHT2." evidence="16">
    <original>H</original>
    <variation>R</variation>
    <location>
        <position position="280"/>
    </location>
</feature>
<feature type="sequence variant" id="VAR_026794" description="In HHT2; dbSNP:rs1085307410." evidence="12">
    <original>L</original>
    <variation>F</variation>
    <location>
        <position position="285"/>
    </location>
</feature>
<feature type="sequence variant" id="VAR_070328" description="In HHT2." evidence="15">
    <original>L</original>
    <variation>P</variation>
    <location>
        <position position="289"/>
    </location>
</feature>
<feature type="sequence variant" id="VAR_070329" description="In HHT2." evidence="16">
    <original>L</original>
    <variation>R</variation>
    <location>
        <position position="294"/>
    </location>
</feature>
<feature type="sequence variant" id="VAR_026795" description="In HHT2; loss of receptor activity in response to BMP9; retained in the endoplasmic reticulum; dbSNP:rs1940807179." evidence="12 21">
    <original>A</original>
    <variation>P</variation>
    <location>
        <position position="306"/>
    </location>
</feature>
<feature type="sequence variant" id="VAR_075240" description="In HHT2; loss of receptor activity in response to BMP9; predominantly retained in the endoplasmic reticulum." evidence="21">
    <original>L</original>
    <variation>V</variation>
    <location>
        <position position="313"/>
    </location>
</feature>
<feature type="sequence variant" id="VAR_026796" description="In HHT2; loss of receptor activity in response to BMP9; retained in the endoplasmic reticulum; dbSNP:rs1565594311." evidence="12 21">
    <original>H</original>
    <variation>Y</variation>
    <location>
        <position position="314"/>
    </location>
</feature>
<feature type="sequence variant" id="VAR_070330" description="In HHT2; dbSNP:rs1565594410." evidence="16">
    <original>H</original>
    <variation>Q</variation>
    <location>
        <position position="328"/>
    </location>
</feature>
<feature type="sequence variant" id="VAR_006210" description="In HHT2; retained in the endoplasmic reticulum; dbSNP:rs863223413." evidence="8 11 23">
    <original>S</original>
    <variation>I</variation>
    <location>
        <position position="333"/>
    </location>
</feature>
<feature type="sequence variant" id="VAR_070331" description="In HHT2." evidence="16">
    <original>N</original>
    <variation>H</variation>
    <location>
        <position position="335"/>
    </location>
</feature>
<feature type="sequence variant" id="VAR_026797" description="In HHT2; dbSNP:rs1592224349." evidence="12">
    <original>L</original>
    <variation>P</variation>
    <location>
        <position position="337"/>
    </location>
</feature>
<feature type="sequence variant" id="VAR_070332" description="In dbSNP:rs762287966." evidence="16">
    <original>L</original>
    <variation>P</variation>
    <location>
        <position position="342"/>
    </location>
</feature>
<feature type="sequence variant" id="VAR_070333" description="In HHT2; dbSNP:rs1592224412." evidence="15">
    <original>C</original>
    <variation>R</variation>
    <location>
        <position position="344"/>
    </location>
</feature>
<feature type="sequence variant" id="VAR_026798" description="In HHT2; retained in the endoplasmic reticulum; dbSNP:rs28936688." evidence="8 11">
    <original>C</original>
    <variation>Y</variation>
    <location>
        <position position="344"/>
    </location>
</feature>
<feature type="sequence variant" id="VAR_070334" description="In HHT2." evidence="16">
    <original>A</original>
    <variation>D</variation>
    <location>
        <position position="347"/>
    </location>
</feature>
<feature type="sequence variant" id="VAR_026799" description="In HHT2." evidence="12">
    <original>A</original>
    <variation>P</variation>
    <location>
        <position position="347"/>
    </location>
</feature>
<feature type="sequence variant" id="VAR_026800" description="In HHT2; retained in the endoplasmic reticulum; dbSNP:rs1060503248." evidence="11 12">
    <original>R</original>
    <variation>Q</variation>
    <location>
        <position position="374"/>
    </location>
</feature>
<feature type="sequence variant" id="VAR_006211" description="In HHT2; dbSNP:rs28936401." evidence="9 11 13 23">
    <original>R</original>
    <variation>W</variation>
    <location>
        <position position="374"/>
    </location>
</feature>
<feature type="sequence variant" id="VAR_006212" description="In HHT2; dbSNP:rs28936399." evidence="22">
    <original>M</original>
    <variation>R</variation>
    <location>
        <position position="376"/>
    </location>
</feature>
<feature type="sequence variant" id="VAR_026801" description="In HHT2; dbSNP:rs1555153277." evidence="12">
    <original>M</original>
    <variation>V</variation>
    <location>
        <position position="376"/>
    </location>
</feature>
<feature type="sequence variant" id="VAR_026802" description="In HHT2; retained in the endoplasmic reticulum." evidence="11">
    <original>P</original>
    <variation>L</variation>
    <location>
        <position position="378"/>
    </location>
</feature>
<feature type="sequence variant" id="VAR_070335" description="In HHT2; loss of receptor activity in response to BMP9; retained in the endoplasmic reticulum; dbSNP:rs959973779." evidence="16 21">
    <original>P</original>
    <variation>S</variation>
    <location>
        <position position="378"/>
    </location>
</feature>
<feature type="sequence variant" id="VAR_075241" description="In HHT2; loss of receptor activity in response to BMP9; retained in the endoplasmic reticulum." evidence="21">
    <original>E</original>
    <variation>D</variation>
    <location>
        <position position="379"/>
    </location>
</feature>
<feature type="sequence variant" id="VAR_026803" description="In HHT2; loss of receptor activity in response to BMP9; retained in the endoplasmic reticulum; dbSNP:rs1131691686." evidence="12 13 21">
    <original>E</original>
    <variation>K</variation>
    <location>
        <position position="379"/>
    </location>
</feature>
<feature type="sequence variant" id="VAR_079587" description="Found in patients with pulmonary arterial hypertension; uncertain significance." evidence="20">
    <original>T</original>
    <variation>A</variation>
    <location>
        <position position="396"/>
    </location>
</feature>
<feature type="sequence variant" id="VAR_026804" description="In HHT2." evidence="12">
    <original>D</original>
    <variation>G</variation>
    <location>
        <position position="397"/>
    </location>
</feature>
<feature type="sequence variant" id="VAR_026805" description="In HHT2; dbSNP:rs121909286." evidence="9">
    <original>I</original>
    <variation>N</variation>
    <location>
        <position position="398"/>
    </location>
</feature>
<feature type="sequence variant" id="VAR_026806" description="In HHT2; dbSNP:rs121909289." evidence="11">
    <original>W</original>
    <variation>S</variation>
    <location>
        <position position="399"/>
    </location>
</feature>
<feature type="sequence variant" id="VAR_070336" description="Found in a patient with hereditary hemorrhagic talagiectasia; uncertain significance." evidence="16">
    <original>A</original>
    <variation>T</variation>
    <location>
        <position position="400"/>
    </location>
</feature>
<feature type="sequence variant" id="VAR_070337" description="In HHT2." evidence="14">
    <original>L</original>
    <variation>P</variation>
    <location>
        <position position="403"/>
    </location>
</feature>
<feature type="sequence variant" id="VAR_075242" description="In HHT2; loss of receptor activity in response to BMP9; predominantly retained in the endoplasmic reticulum." evidence="21">
    <original>V</original>
    <variation>G</variation>
    <location>
        <position position="404"/>
    </location>
</feature>
<feature type="sequence variant" id="VAR_026807" description="In HHT2; dbSNP:rs1565595129." evidence="8 13">
    <original>E</original>
    <variation>D</variation>
    <location>
        <position position="407"/>
    </location>
</feature>
<feature type="sequence variant" id="VAR_026808" description="In HHT2; dbSNP:rs121909284." evidence="12">
    <original>R</original>
    <variation>P</variation>
    <location>
        <position position="411"/>
    </location>
</feature>
<feature type="sequence variant" id="VAR_006213" description="In HHT2; retained in the endoplasmic reticulum; dbSNP:rs121909284." evidence="11 12 22">
    <original>R</original>
    <variation>Q</variation>
    <location>
        <position position="411"/>
    </location>
</feature>
<feature type="sequence variant" id="VAR_026809" description="In HHT2; loss of receptor activity in response to BMP9; predominantly retained in the endoplasmic reticulum; dbSNP:rs121909287." evidence="10 12 13 21">
    <original>R</original>
    <variation>W</variation>
    <location>
        <position position="411"/>
    </location>
</feature>
<feature type="sequence variant" id="VAR_070338" description="In HHT2." evidence="14">
    <original>G</original>
    <variation>S</variation>
    <location>
        <position position="416"/>
    </location>
</feature>
<feature type="sequence variant" id="VAR_075243" description="No loss of receptor activity in response to BMP9; mutant protein is capable of targeting the cell surface appropriately; dbSNP:rs141653630." evidence="21">
    <original>I</original>
    <variation>F</variation>
    <location>
        <position position="417"/>
    </location>
</feature>
<feature type="sequence variant" id="VAR_070339" description="In HHT2; dbSNP:rs1940906429." evidence="16">
    <original>P</original>
    <variation>R</variation>
    <location>
        <position position="424"/>
    </location>
</feature>
<feature type="sequence variant" id="VAR_006214" description="In HHT2; dbSNP:rs1085307419." evidence="23">
    <original>P</original>
    <variation>T</variation>
    <location>
        <position position="424"/>
    </location>
</feature>
<feature type="sequence variant" id="VAR_026810" description="In HHT2." evidence="12">
    <original>F</original>
    <variation>L</variation>
    <location>
        <position position="425"/>
    </location>
</feature>
<feature type="sequence variant" id="VAR_026811" description="In HHT2." evidence="13">
    <original>F</original>
    <variation>V</variation>
    <location>
        <position position="425"/>
    </location>
</feature>
<feature type="sequence variant" id="VAR_026812" description="In HHT2." evidence="13">
    <location>
        <position position="425"/>
    </location>
</feature>
<feature type="sequence variant" id="VAR_070340" description="In HHT2." evidence="15">
    <original>Y</original>
    <variation>C</variation>
    <location>
        <position position="426"/>
    </location>
</feature>
<feature type="sequence variant" id="VAR_070341" description="In HHT2." evidence="15">
    <original>P</original>
    <variation>R</variation>
    <location>
        <position position="433"/>
    </location>
</feature>
<feature type="sequence variant" id="VAR_075244" description="In HHT2; retained in the endoplasmic reticulum; dbSNP:rs1565596498." evidence="21">
    <original>V</original>
    <variation>M</variation>
    <location>
        <position position="441"/>
    </location>
</feature>
<feature type="sequence variant" id="VAR_075245" description="In HHT2; retained in the endoplasmic reticulum." evidence="21">
    <original>C</original>
    <variation>Y</variation>
    <location>
        <position position="443"/>
    </location>
</feature>
<feature type="sequence variant" id="VAR_070342" description="In HHT2; dbSNP:rs1940908457." evidence="16">
    <original>P</original>
    <variation>S</variation>
    <location>
        <position position="449"/>
    </location>
</feature>
<feature type="sequence variant" id="VAR_026813" description="In HHT2." evidence="12">
    <original>R</original>
    <variation>L</variation>
    <location>
        <position position="479"/>
    </location>
</feature>
<feature type="sequence variant" id="VAR_070343" description="In HHT2; dbSNP:rs1085307426." evidence="16">
    <original>R</original>
    <variation>P</variation>
    <location>
        <position position="479"/>
    </location>
</feature>
<feature type="sequence variant" id="VAR_026814" description="In HHT2; likely benign; dbSNP:rs139142865." evidence="12">
    <original>A</original>
    <variation>V</variation>
    <location>
        <position position="482"/>
    </location>
</feature>
<feature type="sequence variant" id="VAR_026815" description="In HHT2; dbSNP:rs121909288." evidence="10 12">
    <original>R</original>
    <variation>W</variation>
    <location>
        <position position="484"/>
    </location>
</feature>
<feature type="sequence variant" id="VAR_070344" description="Found in a patient with hereditary hemorrhagic talagiectasia; uncertain significance; dbSNP:rs113700354." evidence="16">
    <original>K</original>
    <variation>E</variation>
    <location>
        <position position="486"/>
    </location>
</feature>
<feature type="sequence variant" id="VAR_026816" description="In HHT2; mutant protein is capable of targeting the cell surface appropriately; dbSNP:rs1085307428." evidence="11">
    <original>K</original>
    <variation>T</variation>
    <location>
        <position position="487"/>
    </location>
</feature>
<feature type="mutagenesis site" description="Affinity for BMP9 decreased by 200-fold." evidence="19">
    <original>REL</original>
    <variation>DFQ</variation>
    <location>
        <begin position="74"/>
        <end position="76"/>
    </location>
</feature>
<feature type="sequence conflict" description="In Ref. 1; CAA80255." evidence="24" ref="1">
    <original>S</original>
    <variation>T</variation>
    <location>
        <position position="172"/>
    </location>
</feature>
<feature type="helix" evidence="27">
    <location>
        <begin position="26"/>
        <end position="28"/>
    </location>
</feature>
<feature type="strand" evidence="30">
    <location>
        <begin position="32"/>
        <end position="35"/>
    </location>
</feature>
<feature type="strand" evidence="30">
    <location>
        <begin position="42"/>
        <end position="56"/>
    </location>
</feature>
<feature type="strand" evidence="29">
    <location>
        <begin position="59"/>
        <end position="61"/>
    </location>
</feature>
<feature type="strand" evidence="30">
    <location>
        <begin position="64"/>
        <end position="72"/>
    </location>
</feature>
<feature type="helix" evidence="30">
    <location>
        <begin position="74"/>
        <end position="78"/>
    </location>
</feature>
<feature type="strand" evidence="30">
    <location>
        <begin position="83"/>
        <end position="90"/>
    </location>
</feature>
<feature type="turn" evidence="30">
    <location>
        <begin position="93"/>
        <end position="96"/>
    </location>
</feature>
<feature type="helix" evidence="28">
    <location>
        <begin position="198"/>
        <end position="201"/>
    </location>
</feature>
<feature type="strand" evidence="28">
    <location>
        <begin position="203"/>
        <end position="211"/>
    </location>
</feature>
<feature type="strand" evidence="28">
    <location>
        <begin position="214"/>
        <end position="221"/>
    </location>
</feature>
<feature type="strand" evidence="28">
    <location>
        <begin position="224"/>
        <end position="231"/>
    </location>
</feature>
<feature type="helix" evidence="28">
    <location>
        <begin position="233"/>
        <end position="235"/>
    </location>
</feature>
<feature type="helix" evidence="28">
    <location>
        <begin position="236"/>
        <end position="248"/>
    </location>
</feature>
<feature type="strand" evidence="28">
    <location>
        <begin position="259"/>
        <end position="265"/>
    </location>
</feature>
<feature type="strand" evidence="28">
    <location>
        <begin position="267"/>
        <end position="269"/>
    </location>
</feature>
<feature type="strand" evidence="28">
    <location>
        <begin position="272"/>
        <end position="278"/>
    </location>
</feature>
<feature type="helix" evidence="28">
    <location>
        <begin position="285"/>
        <end position="291"/>
    </location>
</feature>
<feature type="helix" evidence="28">
    <location>
        <begin position="296"/>
        <end position="314"/>
    </location>
</feature>
<feature type="strand" evidence="28">
    <location>
        <begin position="325"/>
        <end position="327"/>
    </location>
</feature>
<feature type="strand" evidence="28">
    <location>
        <begin position="335"/>
        <end position="338"/>
    </location>
</feature>
<feature type="strand" evidence="28">
    <location>
        <begin position="344"/>
        <end position="346"/>
    </location>
</feature>
<feature type="strand" evidence="28">
    <location>
        <begin position="353"/>
        <end position="355"/>
    </location>
</feature>
<feature type="strand" evidence="28">
    <location>
        <begin position="357"/>
        <end position="359"/>
    </location>
</feature>
<feature type="helix" evidence="28">
    <location>
        <begin position="373"/>
        <end position="375"/>
    </location>
</feature>
<feature type="helix" evidence="28">
    <location>
        <begin position="378"/>
        <end position="381"/>
    </location>
</feature>
<feature type="helix" evidence="28">
    <location>
        <begin position="390"/>
        <end position="410"/>
    </location>
</feature>
<feature type="turn" evidence="28">
    <location>
        <begin position="424"/>
        <end position="428"/>
    </location>
</feature>
<feature type="helix" evidence="28">
    <location>
        <begin position="435"/>
        <end position="442"/>
    </location>
</feature>
<feature type="strand" evidence="28">
    <location>
        <begin position="455"/>
        <end position="459"/>
    </location>
</feature>
<feature type="turn" evidence="28">
    <location>
        <begin position="460"/>
        <end position="462"/>
    </location>
</feature>
<feature type="helix" evidence="28">
    <location>
        <begin position="463"/>
        <end position="469"/>
    </location>
</feature>
<feature type="helix" evidence="28">
    <location>
        <begin position="476"/>
        <end position="478"/>
    </location>
</feature>
<feature type="helix" evidence="28">
    <location>
        <begin position="482"/>
        <end position="491"/>
    </location>
</feature>
<accession>P37023</accession>
<accession>A6NGA8</accession>
<keyword id="KW-0002">3D-structure</keyword>
<keyword id="KW-0037">Angiogenesis</keyword>
<keyword id="KW-0067">ATP-binding</keyword>
<keyword id="KW-1003">Cell membrane</keyword>
<keyword id="KW-0225">Disease variant</keyword>
<keyword id="KW-1015">Disulfide bond</keyword>
<keyword id="KW-0325">Glycoprotein</keyword>
<keyword id="KW-0418">Kinase</keyword>
<keyword id="KW-0460">Magnesium</keyword>
<keyword id="KW-0464">Manganese</keyword>
<keyword id="KW-0472">Membrane</keyword>
<keyword id="KW-0479">Metal-binding</keyword>
<keyword id="KW-0547">Nucleotide-binding</keyword>
<keyword id="KW-0597">Phosphoprotein</keyword>
<keyword id="KW-1267">Proteomics identification</keyword>
<keyword id="KW-0675">Receptor</keyword>
<keyword id="KW-1185">Reference proteome</keyword>
<keyword id="KW-0723">Serine/threonine-protein kinase</keyword>
<keyword id="KW-0732">Signal</keyword>
<keyword id="KW-0808">Transferase</keyword>
<keyword id="KW-0812">Transmembrane</keyword>
<keyword id="KW-1133">Transmembrane helix</keyword>
<sequence>MTLGSPRKGLLMLLMALVTQGDPVKPSRGPLVTCTCESPHCKGPTCRGAWCTVVLVREEGRHPQEHRGCGNLHRELCRGRPTEFVNHYCCDSHLCNHNVSLVLEATQPPSEQPGTDGQLALILGPVLALLALVALGVLGLWHVRRRQEKQRGLHSELGESSLILKASEQGDSMLGDLLDSDCTTGSGSGLPFLVQRTVARQVALVECVGKGRYGEVWRGLWHGESVAVKIFSSRDEQSWFRETEIYNTVLLRHDNILGFIASDMTSRNSSTQLWLITHYHEHGSLYDFLQRQTLEPHLALRLAVSAACGLAHLHVEIFGTQGKPAIAHRDFKSRNVLVKSNLQCCIADLGLAVMHSQGSDYLDIGNNPRVGTKRYMAPEVLDEQIRTDCFESYKWTDIWAFGLVLWEIARRTIVNGIVEDYRPPFYDVVPNDPSFEDMKKVVCVDQQTPTIPNRLAADPVLSGLAQMMRECWYPNPSARLTALRIKKTLQKISNSPEKPKVIQ</sequence>
<evidence type="ECO:0000250" key="1"/>
<evidence type="ECO:0000250" key="2">
    <source>
        <dbReference type="UniProtKB" id="Q61288"/>
    </source>
</evidence>
<evidence type="ECO:0000255" key="3"/>
<evidence type="ECO:0000255" key="4">
    <source>
        <dbReference type="PROSITE-ProRule" id="PRU00159"/>
    </source>
</evidence>
<evidence type="ECO:0000255" key="5">
    <source>
        <dbReference type="PROSITE-ProRule" id="PRU00585"/>
    </source>
</evidence>
<evidence type="ECO:0000255" key="6">
    <source>
        <dbReference type="PROSITE-ProRule" id="PRU10027"/>
    </source>
</evidence>
<evidence type="ECO:0000269" key="7">
    <source>
    </source>
</evidence>
<evidence type="ECO:0000269" key="8">
    <source>
    </source>
</evidence>
<evidence type="ECO:0000269" key="9">
    <source>
    </source>
</evidence>
<evidence type="ECO:0000269" key="10">
    <source>
    </source>
</evidence>
<evidence type="ECO:0000269" key="11">
    <source>
    </source>
</evidence>
<evidence type="ECO:0000269" key="12">
    <source>
    </source>
</evidence>
<evidence type="ECO:0000269" key="13">
    <source>
    </source>
</evidence>
<evidence type="ECO:0000269" key="14">
    <source>
    </source>
</evidence>
<evidence type="ECO:0000269" key="15">
    <source>
    </source>
</evidence>
<evidence type="ECO:0000269" key="16">
    <source>
    </source>
</evidence>
<evidence type="ECO:0000269" key="17">
    <source>
    </source>
</evidence>
<evidence type="ECO:0000269" key="18">
    <source>
    </source>
</evidence>
<evidence type="ECO:0000269" key="19">
    <source>
    </source>
</evidence>
<evidence type="ECO:0000269" key="20">
    <source>
    </source>
</evidence>
<evidence type="ECO:0000269" key="21">
    <source>
    </source>
</evidence>
<evidence type="ECO:0000269" key="22">
    <source>
    </source>
</evidence>
<evidence type="ECO:0000269" key="23">
    <source>
    </source>
</evidence>
<evidence type="ECO:0000305" key="24"/>
<evidence type="ECO:0007744" key="25">
    <source>
        <dbReference type="PDB" id="2LCR"/>
    </source>
</evidence>
<evidence type="ECO:0007744" key="26">
    <source>
        <dbReference type="PDB" id="4FAO"/>
    </source>
</evidence>
<evidence type="ECO:0007829" key="27">
    <source>
        <dbReference type="PDB" id="2LCR"/>
    </source>
</evidence>
<evidence type="ECO:0007829" key="28">
    <source>
        <dbReference type="PDB" id="3MY0"/>
    </source>
</evidence>
<evidence type="ECO:0007829" key="29">
    <source>
        <dbReference type="PDB" id="6SF1"/>
    </source>
</evidence>
<evidence type="ECO:0007829" key="30">
    <source>
        <dbReference type="PDB" id="6SF3"/>
    </source>
</evidence>
<proteinExistence type="evidence at protein level"/>
<comment type="function">
    <text evidence="18 19 21">Type I receptor for TGF-beta family ligands BMP9/GDF2 and BMP10 and important regulator of normal blood vessel development. On ligand binding, forms a receptor complex consisting of two type II and two type I transmembrane serine/threonine kinases. Type II receptors phosphorylate and activate type I receptors which autophosphorylate, then bind and activate SMAD transcriptional regulators. May bind activin as well.</text>
</comment>
<comment type="catalytic activity">
    <reaction>
        <text>L-threonyl-[receptor-protein] + ATP = O-phospho-L-threonyl-[receptor-protein] + ADP + H(+)</text>
        <dbReference type="Rhea" id="RHEA:44880"/>
        <dbReference type="Rhea" id="RHEA-COMP:11024"/>
        <dbReference type="Rhea" id="RHEA-COMP:11025"/>
        <dbReference type="ChEBI" id="CHEBI:15378"/>
        <dbReference type="ChEBI" id="CHEBI:30013"/>
        <dbReference type="ChEBI" id="CHEBI:30616"/>
        <dbReference type="ChEBI" id="CHEBI:61977"/>
        <dbReference type="ChEBI" id="CHEBI:456216"/>
        <dbReference type="EC" id="2.7.11.30"/>
    </reaction>
</comment>
<comment type="catalytic activity">
    <reaction>
        <text>L-seryl-[receptor-protein] + ATP = O-phospho-L-seryl-[receptor-protein] + ADP + H(+)</text>
        <dbReference type="Rhea" id="RHEA:18673"/>
        <dbReference type="Rhea" id="RHEA-COMP:11022"/>
        <dbReference type="Rhea" id="RHEA-COMP:11023"/>
        <dbReference type="ChEBI" id="CHEBI:15378"/>
        <dbReference type="ChEBI" id="CHEBI:29999"/>
        <dbReference type="ChEBI" id="CHEBI:30616"/>
        <dbReference type="ChEBI" id="CHEBI:83421"/>
        <dbReference type="ChEBI" id="CHEBI:456216"/>
        <dbReference type="EC" id="2.7.11.30"/>
    </reaction>
</comment>
<comment type="cofactor">
    <cofactor evidence="1">
        <name>Mg(2+)</name>
        <dbReference type="ChEBI" id="CHEBI:18420"/>
    </cofactor>
    <cofactor evidence="1">
        <name>Mn(2+)</name>
        <dbReference type="ChEBI" id="CHEBI:29035"/>
    </cofactor>
</comment>
<comment type="subunit">
    <text evidence="17">Interacts with TSC22D1/TSC-22.</text>
</comment>
<comment type="interaction">
    <interactant intactId="EBI-8043559">
        <id>P37023</id>
    </interactant>
    <interactant intactId="EBI-16227344">
        <id>PRO_0000033903</id>
        <label>GDF2</label>
        <dbReference type="UniProtKB" id="Q9UK05"/>
    </interactant>
    <organismsDiffer>false</organismsDiffer>
    <experiments>2</experiments>
</comment>
<comment type="interaction">
    <interactant intactId="EBI-8043559">
        <id>P37023</id>
    </interactant>
    <interactant intactId="EBI-9083443">
        <id>P02750</id>
        <label>LRG1</label>
    </interactant>
    <organismsDiffer>false</organismsDiffer>
    <experiments>3</experiments>
</comment>
<comment type="interaction">
    <interactant intactId="EBI-8043559">
        <id>P37023</id>
    </interactant>
    <interactant intactId="EBI-1048095">
        <id>Q6P474</id>
        <label>PDXDC2P</label>
    </interactant>
    <organismsDiffer>false</organismsDiffer>
    <experiments>2</experiments>
</comment>
<comment type="subcellular location">
    <subcellularLocation>
        <location evidence="21">Cell membrane</location>
        <topology evidence="3">Single-pass type I membrane protein</topology>
    </subcellularLocation>
</comment>
<comment type="disease" evidence="7 8 9 10 11 12 13 14 15 16 21 22 23">
    <disease id="DI-01717">
        <name>Telangiectasia, hereditary hemorrhagic, 2</name>
        <acronym>HHT2</acronym>
        <description>A multisystemic vascular dysplasia leading to dilation of permanent blood vessels and arteriovenous malformations of skin, mucosa, and viscera. The disease is characterized by recurrent epistaxis and gastro-intestinal hemorrhage. Visceral involvement includes arteriovenous malformations of the lung, liver, and brain.</description>
        <dbReference type="MIM" id="600376"/>
    </disease>
    <text>The disease is caused by variants affecting the gene represented in this entry.</text>
</comment>
<comment type="similarity">
    <text evidence="24">Belongs to the protein kinase superfamily. TKL Ser/Thr protein kinase family. TGFB receptor subfamily.</text>
</comment>
<comment type="online information" name="Hereditary Hemorrhagic Telangiectasia and ENG">
    <link uri="http://arup.utah.edu/database/ACVRL1/ACVRL1_welcome.php"/>
</comment>
<organism>
    <name type="scientific">Homo sapiens</name>
    <name type="common">Human</name>
    <dbReference type="NCBI Taxonomy" id="9606"/>
    <lineage>
        <taxon>Eukaryota</taxon>
        <taxon>Metazoa</taxon>
        <taxon>Chordata</taxon>
        <taxon>Craniata</taxon>
        <taxon>Vertebrata</taxon>
        <taxon>Euteleostomi</taxon>
        <taxon>Mammalia</taxon>
        <taxon>Eutheria</taxon>
        <taxon>Euarchontoglires</taxon>
        <taxon>Primates</taxon>
        <taxon>Haplorrhini</taxon>
        <taxon>Catarrhini</taxon>
        <taxon>Hominidae</taxon>
        <taxon>Homo</taxon>
    </lineage>
</organism>